<accession>P54098</accession>
<accession>Q8NFM2</accession>
<accession>Q92515</accession>
<gene>
    <name evidence="53 60" type="primary">POLG</name>
    <name type="synonym">MDP1</name>
    <name evidence="54" type="synonym">POLG1</name>
    <name type="synonym">POLGA</name>
</gene>
<comment type="function">
    <text evidence="2 4 5 6 7 18 25 39 45 48 49 50">Catalytic subunit of DNA polymerase gamma solely responsible for replication of mitochondrial DNA (mtDNA). Replicates both heavy and light strands of the circular mtDNA genome using a single-stranded DNA template, RNA primers and the four deoxyribonucleoside triphosphates as substrates (PubMed:11477093, PubMed:11897778, PubMed:15917273, PubMed:19837034, PubMed:9558343). Has 5' -&gt; 3' polymerase activity. Functionally interacts with TWNK and SSBP1 at the replication fork to form a highly processive replisome, where TWNK unwinds the double-stranded DNA template prior to replication and SSBP1 covers the parental heavy strand to enable continuous replication of the entire mitochondrial genome. A single nucleotide incorporation cycle includes binding of the incoming nucleotide at the insertion site, a phosphodiester bond formation reaction that extends the 3'-end of the primer DNA, and translocation of the primer terminus to the post-insertion site. After completing replication of a mtDNA strand, mediates 3' -&gt; 5' exonucleolytic degradation at the nick to enable proper ligation (PubMed:11477093, PubMed:11897778, PubMed:15167897, PubMed:15917273, PubMed:19837034, PubMed:26095671, PubMed:9558343). Highly accurate due to high nucleotide selectivity and 3' -&gt; 5' exonucleolytic proofreading. Proficiently corrects base substitutions, single-base additions and deletions in non-repetitive sequences and short repeats, but displays lower proofreading activity when replicating longer homopolymeric stretches. Exerts exonuclease activity toward single-stranded DNA and double-stranded DNA containing 3'-terminal mispairs. When a misincorporation occurs, transitions from replication to a pro-nucleolytic editing mode and removes the missincorporated nucleoside in the exonuclease active site. Proceeds via an SN2 nucleolytic mechanism in which Asp-198 catalyzes phosphodiester bond hydrolysis and Glu-200 stabilizes the leaving group. As a result the primer strand becomes one nucleotide shorter and is positioned in the post-insertion site, ready to resume DNA synthesis (PubMed:10827171, PubMed:11477094, PubMed:11504725, PubMed:37202477). Exerts 5'-deoxyribose phosphate (dRP) lyase activity and mediates repair-associated mtDNA synthesis (gap filling) in base-excision repair pathway. Catalyzes the release of the 5'-terminal 2-deoxyribose-5-phosphate sugar moiety from incised apurinic/apyrimidinic (AP) sites to produce a substrate for DNA ligase. The dRP lyase reaction does not require divalent metal ions and likely proceeds via a Schiff base intermediate in a beta-elimination reaction mechanism (PubMed:9770471).</text>
</comment>
<comment type="catalytic activity">
    <reaction evidence="2 4 7 18 25 39 44 45 48 49">
        <text>DNA(n) + a 2'-deoxyribonucleoside 5'-triphosphate = DNA(n+1) + diphosphate</text>
        <dbReference type="Rhea" id="RHEA:22508"/>
        <dbReference type="Rhea" id="RHEA-COMP:17339"/>
        <dbReference type="Rhea" id="RHEA-COMP:17340"/>
        <dbReference type="ChEBI" id="CHEBI:33019"/>
        <dbReference type="ChEBI" id="CHEBI:61560"/>
        <dbReference type="ChEBI" id="CHEBI:173112"/>
        <dbReference type="EC" id="2.7.7.7"/>
    </reaction>
    <physiologicalReaction direction="left-to-right" evidence="2 4 7 18 25 39 44 45 48 49">
        <dbReference type="Rhea" id="RHEA:22509"/>
    </physiologicalReaction>
</comment>
<comment type="catalytic activity">
    <reaction evidence="2 5 7 45 49">
        <text>a 3'-end 2'-deoxyribonucleotidyl-deoxyribonucleotide-DNA + H2O = a 3'-end 2'-deoxyribonucleotide-DNA + a 2'-deoxyribonucleoside 5'-phosphate + H(+)</text>
        <dbReference type="Rhea" id="RHEA:77911"/>
        <dbReference type="Rhea" id="RHEA-COMP:13863"/>
        <dbReference type="Rhea" id="RHEA-COMP:19009"/>
        <dbReference type="ChEBI" id="CHEBI:15377"/>
        <dbReference type="ChEBI" id="CHEBI:15378"/>
        <dbReference type="ChEBI" id="CHEBI:65317"/>
        <dbReference type="ChEBI" id="CHEBI:138148"/>
        <dbReference type="ChEBI" id="CHEBI:228185"/>
    </reaction>
    <physiologicalReaction direction="left-to-right" evidence="2 5 7 45 49">
        <dbReference type="Rhea" id="RHEA:77912"/>
    </physiologicalReaction>
</comment>
<comment type="catalytic activity">
    <reaction evidence="50">
        <text>a 5'-end 2'-deoxyribose-2'-deoxyribonucleotide-DNA = (2E,4S)-4-hydroxypenten-2-al-5-phosphate + a 5'-end 5'-phospho-2'-deoxyribonucleoside-DNA + H(+)</text>
        <dbReference type="Rhea" id="RHEA:76255"/>
        <dbReference type="Rhea" id="RHEA-COMP:13180"/>
        <dbReference type="Rhea" id="RHEA-COMP:18657"/>
        <dbReference type="ChEBI" id="CHEBI:15378"/>
        <dbReference type="ChEBI" id="CHEBI:136412"/>
        <dbReference type="ChEBI" id="CHEBI:195194"/>
        <dbReference type="ChEBI" id="CHEBI:195195"/>
    </reaction>
    <physiologicalReaction direction="left-to-right" evidence="50">
        <dbReference type="Rhea" id="RHEA:76256"/>
    </physiologicalReaction>
</comment>
<comment type="cofactor">
    <cofactor evidence="44">
        <name>Mg(2+)</name>
        <dbReference type="ChEBI" id="CHEBI:18420"/>
    </cofactor>
</comment>
<comment type="activity regulation">
    <text evidence="44">Inhibited by dideoxynucleotides such as antiviral agent zalcitabine.</text>
</comment>
<comment type="biophysicochemical properties">
    <kinetics>
        <KM evidence="6">0.011 uM for dTTP (POLG polymerase activity at matched G:C primer-template)</KM>
        <KM evidence="6">0.015 uM for dTTP (POLG:POLG2 polymerase activity at matched G:C primer-template)</KM>
        <KM evidence="6">5.5 uM for dTTP (POLG polymerase activity at mismatched A:C primer-template)</KM>
        <KM evidence="6">7.6 uM for dTTP (POLG:POLG2 polymerase activity at mismatched A:C primer-template)</KM>
        <KM evidence="6">10 uM for dTTP (POLG polymerase activity at mismatched T:C primer-template)</KM>
        <KM evidence="6">5.5 uM for dTTP (POLG:POLG2 polymerase activity at mismatched T:C primer-template)</KM>
        <KM evidence="6">13 uM for dTTP (POLG polymerase activity at mismatched G:G primer-template)</KM>
        <KM evidence="6">11 uM for dTTP (POLG:POLG2 polymerase activity at mismatched G:G primer-template)</KM>
        <KM evidence="6">55 uM for dTTP (POLG polymerase activity at mismatched C:C primer-template)</KM>
        <KM evidence="6">11 uM for dTTP (POLG:POLG2 polymerase activity at mismatched C:C primer-template)</KM>
    </kinetics>
</comment>
<comment type="subunit">
    <text evidence="4 5 18 39 44 48">Heterotrimer composed of a catalytic subunit and a homodimer of accessory subunits (POLG:POLG2) (PubMed:11477093, PubMed:11477094, PubMed:15167897, PubMed:19837034, PubMed:26056153, PubMed:37202477). Interacts with TTC3 (PubMed:29290964). Interacts with LIG3 (PubMed:33855352).</text>
</comment>
<comment type="interaction">
    <interactant intactId="EBI-852624">
        <id>P54098</id>
    </interactant>
    <interactant intactId="EBI-852642">
        <id>Q9UHN1</id>
        <label>POLG2</label>
    </interactant>
    <organismsDiffer>false</organismsDiffer>
    <experiments>14</experiments>
</comment>
<comment type="subcellular location">
    <subcellularLocation>
        <location evidence="2 35">Mitochondrion</location>
    </subcellularLocation>
    <subcellularLocation>
        <location evidence="35">Mitochondrion matrix</location>
        <location evidence="35">Mitochondrion nucleoid</location>
    </subcellularLocation>
</comment>
<comment type="domain">
    <text evidence="44 55 56">The polymerase domain encompasses three conserved active site motifs: Pol A (residues 887-896), Pol B (residues 943-958) and Pol C (residues 1134-1141). Binds the incoming dNTPs and undergoes an open to close coformation change to catalyze the formation of phosphodiester bond.</text>
</comment>
<comment type="domain">
    <text evidence="48 55 56">The 3' -&gt; 5' exonuclease domain comprises three conserved active site motifs: Exo I (residues 196-200), Exo II (residues 267-275) and Exo III (residues 395-403). Proofreads the newly synthesized DNA strand.</text>
</comment>
<comment type="domain">
    <text evidence="48">The trigger loop contracts to enable correctly matched primer-template pair entry into the polymerase domain and extends to preclude the mismatched one.</text>
</comment>
<comment type="domain">
    <text evidence="44">The accessory determinant domain (AID) interacts with POLG2 proximal monomer.</text>
</comment>
<comment type="polymorphism">
    <text evidence="51 52">The poly-Gln region seems to be polymorphic.</text>
</comment>
<comment type="disease" evidence="7 8 20 22 33 34 36">
    <disease id="DI-00943">
        <name>Progressive external ophthalmoplegia with mitochondrial DNA deletions, autosomal dominant, 1</name>
        <acronym>PEOA1</acronym>
        <description>A disorder characterized by progressive weakness of ocular muscles and levator muscle of the upper eyelid. In a minority of cases, it is associated with skeletal myopathy, which predominantly involves axial or proximal muscles and which causes abnormal fatigability and even permanent muscle weakness. Ragged-red fibers and atrophy are found on muscle biopsy. A large proportion of chronic ophthalmoplegias are associated with other symptoms, leading to a multisystemic pattern of this disease. Additional symptoms are variable, and may include cataracts, hearing loss, sensory axonal neuropathy, ataxia, depression, hypogonadism, and parkinsonism.</description>
        <dbReference type="MIM" id="157640"/>
    </disease>
    <text>The disease is caused by variants affecting the gene represented in this entry.</text>
</comment>
<comment type="disease" evidence="3 8 10 12 13 14 19 20 21 25 28 29 30 31 41 45">
    <disease id="DI-00947">
        <name>Progressive external ophthalmoplegia with mitochondrial DNA deletions, autosomal recessive, 1</name>
        <acronym>PEOB1</acronym>
        <description>A severe form of progressive external ophthalmoplegia, a disorder characterized by progressive weakness of ocular muscles and levator muscle of the upper eyelid. It is clinically more heterogeneous than the autosomal dominant forms.</description>
        <dbReference type="MIM" id="258450"/>
    </disease>
    <text>The disease is caused by variants affecting the gene represented in this entry.</text>
</comment>
<comment type="disease" evidence="9 16 21 24 25 27 29 31 32">
    <disease id="DI-01014">
        <name>Sensory ataxic neuropathy dysarthria and ophthalmoparesis</name>
        <acronym>SANDO</acronym>
        <description>A systemic disorder resulting from mitochondrial dysfunction associated with mitochondrial depletion in skeletal muscle and peripheral nerve tissue. The clinical triad of symptoms consists of sensory ataxic neuropathy, dysarthria, and ophthalmoparesis. However, the phenotype varies widely, even within the same family, and can also include myopathy, seizures, and hearing loss.</description>
        <dbReference type="MIM" id="607459"/>
    </disease>
    <text>The disease is caused by variants affecting the gene represented in this entry.</text>
</comment>
<comment type="disease" evidence="17 23 26 29 31 37 40 42 43">
    <disease id="DI-00079">
        <name>Mitochondrial DNA depletion syndrome 4A</name>
        <acronym>MTDPS4A</acronym>
        <description>An autosomal recessive hepatocerebral syndrome due to mitochondrial dysfunction. The typical course of the disease includes severe developmental delay, intractable seizures, liver failure, and death in childhood. Refractory seizures, cortical blindness, progressive liver dysfunction, and acute liver failure after exposure to valproic acid are considered diagnostic features. The neuropathological hallmarks are neuronal loss, spongiform degeneration, and astrocytosis of the visual cortex. Liver biopsy results show steatosis, often progressing to cirrhosis.</description>
        <dbReference type="MIM" id="203700"/>
    </disease>
    <text>The disease is caused by variants affecting the gene represented in this entry.</text>
</comment>
<comment type="disease" evidence="11 38">
    <disease id="DI-02989">
        <name>Mitochondrial DNA depletion syndrome 4B</name>
        <acronym>MTDPS4B</acronym>
        <description>An autosomal recessive progressive multisystem disorder due to mitochondrial dysfunction. It is clinically characterized by chronic gastrointestinal dysmotility and pseudo-obstruction, cachexia, progressive external ophthalmoplegia, axonal sensory ataxic neuropathy, and muscle weakness.</description>
        <dbReference type="MIM" id="613662"/>
    </disease>
    <text>The disease is caused by variants affecting the gene represented in this entry.</text>
</comment>
<comment type="disease" evidence="37 45">
    <disease id="DI-01886">
        <name>Leigh syndrome</name>
        <acronym>LS</acronym>
        <description>An early-onset progressive neurodegenerative disorder characterized by the presence of focal, bilateral lesions in one or more areas of the central nervous system including the brainstem, thalamus, basal ganglia, cerebellum and spinal cord. Clinical features depend on which areas of the central nervous system are involved and include subacute onset of psychomotor retardation, hypotonia, ataxia, weakness, vision loss, eye movement abnormalities, seizures, and dysphagia.</description>
        <dbReference type="MIM" id="256000"/>
    </disease>
    <text>The disease is caused by variants affecting the gene represented in this entry.</text>
</comment>
<comment type="disease" evidence="15 40 46">
    <disease id="DI-04684">
        <name>Spinocerebellar ataxia with epilepsy</name>
        <acronym>SCAE</acronym>
        <description>An autosomal recessive syndrome characterized by headaches and/or seizures manifesting in childhood or adolescence, cerebellar and sensory ataxia, dysarthria, and myoclonus manifesting in early adulthood. Neuropathological findings include spinocerebellar degeneration associated with cortical neuronal degeneration in advanced cases.</description>
        <dbReference type="MIM" id="607459"/>
    </disease>
    <text>The disease is caused by variants affecting the gene represented in this entry.</text>
</comment>
<comment type="similarity">
    <text evidence="57">Belongs to the DNA polymerase type-A family.</text>
</comment>
<feature type="chain" id="PRO_0000101270" description="DNA polymerase subunit gamma-1">
    <location>
        <begin position="1"/>
        <end position="1239"/>
    </location>
</feature>
<feature type="region of interest" description="Disordered" evidence="1">
    <location>
        <begin position="1"/>
        <end position="68"/>
    </location>
</feature>
<feature type="region of interest" description="Does not contribute to polymerase and exonuclease enzymatic activities" evidence="2">
    <location>
        <begin position="43"/>
        <end position="55"/>
    </location>
</feature>
<feature type="region of interest" description="Disordered" evidence="1">
    <location>
        <begin position="318"/>
        <end position="340"/>
    </location>
</feature>
<feature type="region of interest" description="Disordered" evidence="1">
    <location>
        <begin position="506"/>
        <end position="531"/>
    </location>
</feature>
<feature type="region of interest" description="Accessory-interacting determinant" evidence="44">
    <location>
        <begin position="510"/>
        <end position="571"/>
    </location>
</feature>
<feature type="region of interest" description="Trigger loop" evidence="48">
    <location>
        <begin position="858"/>
        <end position="864"/>
    </location>
</feature>
<feature type="short sequence motif" description="Exo I" evidence="55 56">
    <location>
        <begin position="196"/>
        <end position="200"/>
    </location>
</feature>
<feature type="short sequence motif" description="Exo II" evidence="55 56">
    <location>
        <begin position="267"/>
        <end position="275"/>
    </location>
</feature>
<feature type="short sequence motif" description="Exo III" evidence="55 56">
    <location>
        <begin position="395"/>
        <end position="403"/>
    </location>
</feature>
<feature type="short sequence motif" description="Pol A" evidence="55 56">
    <location>
        <begin position="887"/>
        <end position="896"/>
    </location>
</feature>
<feature type="short sequence motif" description="Pol B" evidence="55 56">
    <location>
        <begin position="943"/>
        <end position="958"/>
    </location>
</feature>
<feature type="short sequence motif" description="Pol C" evidence="55 56">
    <location>
        <begin position="1134"/>
        <end position="1141"/>
    </location>
</feature>
<feature type="compositionally biased region" description="Low complexity" evidence="1">
    <location>
        <begin position="9"/>
        <end position="36"/>
    </location>
</feature>
<feature type="compositionally biased region" description="Low complexity" evidence="1">
    <location>
        <begin position="44"/>
        <end position="60"/>
    </location>
</feature>
<feature type="active site" description="Exonuclease activity" evidence="48">
    <location>
        <position position="198"/>
    </location>
</feature>
<feature type="binding site" evidence="48 62">
    <location>
        <position position="306"/>
    </location>
    <ligand>
        <name>DNA</name>
        <dbReference type="ChEBI" id="CHEBI:16991"/>
        <label>template strand</label>
    </ligand>
</feature>
<feature type="binding site" evidence="58 61">
    <location>
        <position position="579"/>
    </location>
    <ligand>
        <name>RNA</name>
        <dbReference type="ChEBI" id="CHEBI:33697"/>
        <label>primer</label>
    </ligand>
</feature>
<feature type="binding site" evidence="44 48 61 62">
    <location>
        <position position="593"/>
    </location>
    <ligand>
        <name>DNA</name>
        <dbReference type="ChEBI" id="CHEBI:16991"/>
        <label>template strand</label>
    </ligand>
</feature>
<feature type="binding site" evidence="59 62">
    <location>
        <position position="754"/>
    </location>
    <ligand>
        <name>RNA</name>
        <dbReference type="ChEBI" id="CHEBI:33697"/>
        <label>primer</label>
    </ligand>
</feature>
<feature type="binding site" evidence="59 62">
    <location>
        <position position="763"/>
    </location>
    <ligand>
        <name>RNA</name>
        <dbReference type="ChEBI" id="CHEBI:33697"/>
        <label>primer</label>
    </ligand>
</feature>
<feature type="binding site" evidence="59 62">
    <location>
        <position position="768"/>
    </location>
    <ligand>
        <name>RNA</name>
        <dbReference type="ChEBI" id="CHEBI:33697"/>
        <label>primer</label>
    </ligand>
</feature>
<feature type="binding site" evidence="48 62">
    <location>
        <position position="806"/>
    </location>
    <ligand>
        <name>DNA</name>
        <dbReference type="ChEBI" id="CHEBI:16991"/>
        <label>template strand</label>
    </ligand>
</feature>
<feature type="binding site" evidence="44 61">
    <location>
        <position position="849"/>
    </location>
    <ligand>
        <name>DNA</name>
        <dbReference type="ChEBI" id="CHEBI:16991"/>
        <label>template strand</label>
    </ligand>
</feature>
<feature type="binding site" evidence="59 62">
    <location>
        <position position="863"/>
    </location>
    <ligand>
        <name>RNA</name>
        <dbReference type="ChEBI" id="CHEBI:33697"/>
        <label>primer</label>
    </ligand>
</feature>
<feature type="binding site" evidence="58 61">
    <location>
        <position position="869"/>
    </location>
    <ligand>
        <name>RNA</name>
        <dbReference type="ChEBI" id="CHEBI:33697"/>
        <label>primer</label>
    </ligand>
</feature>
<feature type="binding site" evidence="44 48 61 62">
    <location>
        <position position="890"/>
    </location>
    <ligand>
        <name>a 2'-deoxyribonucleoside 5'-triphosphate</name>
        <dbReference type="ChEBI" id="CHEBI:61560"/>
    </ligand>
</feature>
<feature type="binding site" evidence="44 61">
    <location>
        <position position="890"/>
    </location>
    <ligand>
        <name>Mg(2+)</name>
        <dbReference type="ChEBI" id="CHEBI:18420"/>
        <label>1</label>
        <note>catalytic</note>
    </ligand>
</feature>
<feature type="binding site" evidence="44 61">
    <location>
        <position position="890"/>
    </location>
    <ligand>
        <name>Mg(2+)</name>
        <dbReference type="ChEBI" id="CHEBI:18420"/>
        <label>2</label>
        <note>catalytic</note>
    </ligand>
</feature>
<feature type="binding site" evidence="44 48 61 62">
    <location>
        <position position="891"/>
    </location>
    <ligand>
        <name>a 2'-deoxyribonucleoside 5'-triphosphate</name>
        <dbReference type="ChEBI" id="CHEBI:61560"/>
    </ligand>
</feature>
<feature type="binding site" evidence="44 61">
    <location>
        <position position="891"/>
    </location>
    <ligand>
        <name>Mg(2+)</name>
        <dbReference type="ChEBI" id="CHEBI:18420"/>
        <label>2</label>
        <note>catalytic</note>
    </ligand>
</feature>
<feature type="binding site" evidence="48 62">
    <location>
        <position position="893"/>
    </location>
    <ligand>
        <name>a 2'-deoxyribonucleoside 5'-triphosphate</name>
        <dbReference type="ChEBI" id="CHEBI:61560"/>
    </ligand>
</feature>
<feature type="binding site" evidence="44 61">
    <location>
        <position position="895"/>
    </location>
    <ligand>
        <name>a 2'-deoxyribonucleoside 5'-triphosphate</name>
        <dbReference type="ChEBI" id="CHEBI:61560"/>
    </ligand>
</feature>
<feature type="binding site" evidence="48 62">
    <location>
        <position position="943"/>
    </location>
    <ligand>
        <name>a 2'-deoxyribonucleoside 5'-triphosphate</name>
        <dbReference type="ChEBI" id="CHEBI:61560"/>
    </ligand>
</feature>
<feature type="binding site" evidence="44 48 61 62">
    <location>
        <position position="947"/>
    </location>
    <ligand>
        <name>a 2'-deoxyribonucleoside 5'-triphosphate</name>
        <dbReference type="ChEBI" id="CHEBI:61560"/>
    </ligand>
</feature>
<feature type="binding site" evidence="44 48 61 62">
    <location>
        <position position="951"/>
    </location>
    <ligand>
        <name>a 2'-deoxyribonucleoside 5'-triphosphate</name>
        <dbReference type="ChEBI" id="CHEBI:61560"/>
    </ligand>
</feature>
<feature type="binding site" evidence="44 61">
    <location>
        <position position="1094"/>
    </location>
    <ligand>
        <name>DNA</name>
        <dbReference type="ChEBI" id="CHEBI:16991"/>
        <label>template strand</label>
    </ligand>
</feature>
<feature type="binding site" evidence="48 62">
    <location>
        <position position="1095"/>
    </location>
    <ligand>
        <name>DNA</name>
        <dbReference type="ChEBI" id="CHEBI:16991"/>
        <label>template strand</label>
    </ligand>
</feature>
<feature type="binding site" evidence="44 48 61 62">
    <location>
        <position position="1135"/>
    </location>
    <ligand>
        <name>a 2'-deoxyribonucleoside 5'-triphosphate</name>
        <dbReference type="ChEBI" id="CHEBI:61560"/>
    </ligand>
</feature>
<feature type="binding site" evidence="44 61">
    <location>
        <position position="1135"/>
    </location>
    <ligand>
        <name>Mg(2+)</name>
        <dbReference type="ChEBI" id="CHEBI:18420"/>
        <label>1</label>
        <note>catalytic</note>
    </ligand>
</feature>
<feature type="binding site" evidence="44 61">
    <location>
        <position position="1135"/>
    </location>
    <ligand>
        <name>Mg(2+)</name>
        <dbReference type="ChEBI" id="CHEBI:18420"/>
        <label>2</label>
        <note>catalytic</note>
    </ligand>
</feature>
<feature type="site" description="Critical for replication fidelity and mismatch recognition" evidence="48">
    <location>
        <position position="853"/>
    </location>
</feature>
<feature type="site" description="Critical for replication fidelity and mismatch recognition" evidence="48">
    <location>
        <position position="1102"/>
    </location>
</feature>
<feature type="sequence variant" id="VAR_012153" description="In PEOB1 and SANDO; dbSNP:rs121918045." evidence="3 9">
    <original>R</original>
    <variation>P</variation>
    <location>
        <position position="3"/>
    </location>
</feature>
<feature type="sequence variant" id="VAR_014904" description="In dbSNP:rs3087373.">
    <original>P</original>
    <variation>S</variation>
    <location>
        <position position="18"/>
    </location>
</feature>
<feature type="sequence variant" id="VAR_019265" evidence="52">
    <original>Q</original>
    <variation>QQ</variation>
    <location>
        <position position="55"/>
    </location>
</feature>
<feature type="sequence variant" id="VAR_019266" evidence="51">
    <original>Q</original>
    <variation>QQQ</variation>
    <location>
        <position position="55"/>
    </location>
</feature>
<feature type="sequence variant" id="VAR_019267" description="In dbSNP:rs3176162." evidence="52">
    <original>R</original>
    <variation>Q</variation>
    <location>
        <position position="193"/>
    </location>
</feature>
<feature type="sequence variant" id="VAR_023663" description="In PEOB1 and MTDPS4B; dbSNP:rs121918056." evidence="10 19 38">
    <original>R</original>
    <variation>W</variation>
    <location>
        <position position="227"/>
    </location>
</feature>
<feature type="sequence variant" id="VAR_058870" description="In MTDPS4A." evidence="23">
    <original>R</original>
    <variation>G</variation>
    <location>
        <position position="232"/>
    </location>
</feature>
<feature type="sequence variant" id="VAR_058871" description="In LS; displays markedly increased exonuclease activity and reduced polymerization activity; produces ligatable 5'-ends; dbSNP:rs113994093." evidence="37 45">
    <original>R</original>
    <variation>H</variation>
    <location>
        <position position="232"/>
    </location>
</feature>
<feature type="sequence variant" id="VAR_058872" description="In MTDPS4A." evidence="23">
    <original>L</original>
    <variation>P</variation>
    <location>
        <position position="244"/>
    </location>
</feature>
<feature type="sequence variant" id="VAR_023664" description="In PEOB1, MTDPS4A and MTDPS4B; dbSNP:rs113994094." evidence="8 10 11 14 37">
    <original>T</original>
    <variation>I</variation>
    <location>
        <position position="251"/>
    </location>
</feature>
<feature type="sequence variant" id="VAR_058873" description="In PEOB1; sporadic case; displays mildly reduced exonuclease activity; does not affect the polymerization activity or 5'-end ligation; dbSNP:rs61752784." evidence="14 45">
    <original>G</original>
    <variation>A</variation>
    <location>
        <position position="268"/>
    </location>
</feature>
<feature type="sequence variant" id="VAR_088657" description="Found in a patient with epileptic encephalopathy, developmental delay and moderate intellectual disability; uncertain significance; displays mildly reduced exonuclease activity; reduced polymerization activity; reduced DNA-binding affinity; does not affect 5'-end ligation; dbSNP:rs1555453950." evidence="45 47">
    <original>R</original>
    <variation>Q</variation>
    <location>
        <position position="275"/>
    </location>
</feature>
<feature type="sequence variant" id="VAR_088658" description="In PEOB1; uncertain significance; does not affect exonuclease activity; does not affect polymerization activity; does not affect 5'-end ligation; dbSNP:rs138929605." evidence="41 45">
    <original>H</original>
    <variation>L</variation>
    <location>
        <position position="277"/>
    </location>
</feature>
<feature type="sequence variant" id="VAR_088659" description="In MTDPS4A; likely pathogenic; results in loss of exonuclease activity and formation of an unligatable 5'-flap; displays low polymerization activity and reduced DNA-binding affinity; dbSNP:rs749799663." evidence="40 45">
    <original>G</original>
    <variation>R</variation>
    <location>
        <position position="303"/>
    </location>
</feature>
<feature type="sequence variant" id="VAR_012154" description="In PEOB1 and SANDO; results in loss of exonuclease activity and formation of an unligatable 5'-flap; displays low polymerization activity and reduced DNA-binding affinity; dbSNP:rs121918044." evidence="3 9 31 45">
    <original>L</original>
    <variation>R</variation>
    <location>
        <position position="304"/>
    </location>
</feature>
<feature type="sequence variant" id="VAR_058874" description="In PEOB1.">
    <original>L</original>
    <variation>SANDO</variation>
    <location>
        <position position="304"/>
    </location>
</feature>
<feature type="sequence variant" id="VAR_088660" description="In MTDPS4A; likely pathogenic; results in loss of exonuclease activity and formation of an unligatable 5'-flap; displays low polymerization activity and reduced DNA-binding affinity; dbSNP:rs769410130." evidence="42 45">
    <original>S</original>
    <variation>R</variation>
    <location>
        <position position="305"/>
    </location>
</feature>
<feature type="sequence variant" id="VAR_058875" description="In PEOB1; sporadic case; dbSNP:rs745539599." evidence="29">
    <original>Q</original>
    <variation>H</variation>
    <location>
        <position position="308"/>
    </location>
</feature>
<feature type="sequence variant" id="VAR_023665" description="In PEOB1." evidence="8 19">
    <original>R</original>
    <variation>L</variation>
    <location>
        <position position="309"/>
    </location>
</feature>
<feature type="sequence variant" id="VAR_023666" description="In PEOB1; sporadic case." evidence="10 14">
    <original>W</original>
    <variation>R</variation>
    <location>
        <position position="312"/>
    </location>
</feature>
<feature type="sequence variant" id="VAR_014905" description="In dbSNP:rs2307437.">
    <original>P</original>
    <variation>S</variation>
    <location>
        <position position="324"/>
    </location>
</feature>
<feature type="sequence variant" id="VAR_058876" description="In PEOB1." evidence="31">
    <original>G</original>
    <variation>D</variation>
    <location>
        <position position="380"/>
    </location>
</feature>
<feature type="sequence variant" id="VAR_023667" description="In PEOB1; sporadic case." evidence="10">
    <original>G</original>
    <variation>V</variation>
    <location>
        <position position="431"/>
    </location>
</feature>
<feature type="sequence variant" id="VAR_058877" description="In dbSNP:rs150828914." evidence="33">
    <original>L</original>
    <variation>F</variation>
    <location>
        <position position="463"/>
    </location>
</feature>
<feature type="sequence variant" id="VAR_012155" description="In PEOB1, SANDO, SCAE and MTDPS4A; pathogenic; results in clearly decreased activity, DNA binding and processivity of the polymerase; dbSNP:rs113994095." evidence="3 9 10 14 15 17 21 23 24 25 31 37 40 42 46">
    <original>A</original>
    <variation>T</variation>
    <location>
        <position position="467"/>
    </location>
</feature>
<feature type="sequence variant" id="VAR_023668" description="In PEOB1; dbSNP:rs145843073." evidence="20">
    <original>N</original>
    <variation>D</variation>
    <location>
        <position position="468"/>
    </location>
</feature>
<feature type="sequence variant" id="VAR_023669" description="In SANDO and SCAE; dbSNP:rs121918052." evidence="24 46">
    <original>Q</original>
    <variation>H</variation>
    <location>
        <position position="497"/>
    </location>
</feature>
<feature type="sequence variant" id="VAR_058878" description="In PEOA1; dbSNP:rs121918055." evidence="33">
    <original>S</original>
    <variation>N</variation>
    <location>
        <position position="511"/>
    </location>
</feature>
<feature type="sequence variant" id="VAR_058879" description="In SANDO; dbSNP:rs61752783." evidence="29">
    <original>G</original>
    <variation>V</variation>
    <location>
        <position position="517"/>
    </location>
</feature>
<feature type="sequence variant" id="VAR_014906" description="In dbSNP:rs2307447." evidence="52">
    <original>R</original>
    <variation>C</variation>
    <location>
        <position position="546"/>
    </location>
</feature>
<feature type="sequence variant" id="VAR_058880" description="In PEOB1; sporadic case; dbSNP:rs781168350." evidence="14">
    <original>R</original>
    <variation>Q</variation>
    <location>
        <position position="562"/>
    </location>
</feature>
<feature type="sequence variant" id="VAR_058881" description="In PEOB1; sporadic case; dbSNP:rs774474723." evidence="29">
    <original>R</original>
    <variation>W</variation>
    <location>
        <position position="574"/>
    </location>
</feature>
<feature type="sequence variant" id="VAR_023670" description="In PEOB1; dbSNP:rs556925652." evidence="13">
    <original>R</original>
    <variation>W</variation>
    <location>
        <position position="579"/>
    </location>
</feature>
<feature type="sequence variant" id="VAR_023671" description="In PEOB1, MTDPS4A and MTDPS4B; dbSNP:rs113994096." evidence="11 13 14 19 23 37">
    <original>P</original>
    <variation>L</variation>
    <location>
        <position position="587"/>
    </location>
</feature>
<feature type="sequence variant" id="VAR_058882" description="In PEOB1." evidence="28">
    <original>M</original>
    <variation>L</variation>
    <location>
        <position position="603"/>
    </location>
</feature>
<feature type="sequence variant" id="VAR_058883" description="In SANDO; shows DNA binding affinity and processivities similar to the controls; dbSNP:rs375305567." evidence="25">
    <original>R</original>
    <variation>Q</variation>
    <location>
        <position position="627"/>
    </location>
</feature>
<feature type="sequence variant" id="VAR_023672" description="In SANDO; sporadic case; dbSNP:rs121918046." evidence="9">
    <original>R</original>
    <variation>W</variation>
    <location>
        <position position="627"/>
    </location>
</feature>
<feature type="sequence variant" id="VAR_058884" description="In PEOB1; sporadic case; also in SANDO; dbSNP:rs796052906." evidence="29 32">
    <original>P</original>
    <variation>R</variation>
    <location>
        <position position="648"/>
    </location>
</feature>
<feature type="sequence variant" id="VAR_014907" description="In dbSNP:rs2307450." evidence="52">
    <original>E</original>
    <variation>K</variation>
    <location>
        <position position="662"/>
    </location>
</feature>
<feature type="sequence variant" id="VAR_058885" description="In PEOB1; with absence of progressive external ophthalmoplegia; dbSNP:rs121918054." evidence="30">
    <original>G</original>
    <variation>R</variation>
    <location>
        <position position="737"/>
    </location>
</feature>
<feature type="sequence variant" id="VAR_023673" description="In SANDO, SCAE and MTDPS4A; pathogenic; dbSNP:rs113994097." evidence="21 24 26 27 31 37 40 42 46">
    <original>W</original>
    <variation>S</variation>
    <location>
        <position position="748"/>
    </location>
</feature>
<feature type="sequence variant" id="VAR_058886" description="In MTDPS4A." evidence="29">
    <original>A</original>
    <variation>D</variation>
    <location>
        <position position="767"/>
    </location>
</feature>
<feature type="sequence variant" id="VAR_058887" description="In SANDO; dbSNP:rs769827124." evidence="32">
    <original>R</original>
    <variation>C</variation>
    <location>
        <position position="807"/>
    </location>
</feature>
<feature type="sequence variant" id="VAR_058888" description="In PEOB1; sporadic case." evidence="14">
    <original>R</original>
    <variation>P</variation>
    <location>
        <position position="807"/>
    </location>
</feature>
<feature type="sequence variant" id="VAR_023674" description="In PEOA1 and MTDPS4A; uncertain significance; dbSNP:rs41549716." evidence="22 34 37">
    <original>Y</original>
    <variation>C</variation>
    <location>
        <position position="831"/>
    </location>
</feature>
<feature type="sequence variant" id="VAR_023675" description="In PEOB1, MTDPS4A, MTDPS4B and LS; also found in a patient with epileptic encephalopathy, developmental delay and moderate intellectual disability; dbSNP:rs113994098." evidence="8 12 23 26 37 38 40 42 47">
    <original>G</original>
    <variation>S</variation>
    <location>
        <position position="848"/>
    </location>
</feature>
<feature type="sequence variant" id="VAR_088688" description="In MTDPS4A; likely pathogenic." evidence="42">
    <original>R</original>
    <variation>C</variation>
    <location>
        <position position="852"/>
    </location>
</feature>
<feature type="sequence variant" id="VAR_058889" description="In PEOB1; with absence of progressive external ophthalmoplegia; dbSNP:rs121918053." evidence="28 30">
    <original>R</original>
    <variation>W</variation>
    <location>
        <position position="853"/>
    </location>
</feature>
<feature type="sequence variant" id="VAR_023676" description="In MTDPS4B; dbSNP:rs121918050." evidence="11">
    <original>N</original>
    <variation>S</variation>
    <location>
        <position position="864"/>
    </location>
</feature>
<feature type="sequence variant" id="VAR_058890" description="In MTDPS4A." evidence="29">
    <original>Q</original>
    <variation>H</variation>
    <location>
        <position position="879"/>
    </location>
</feature>
<feature type="sequence variant" id="VAR_058891" description="In MTDPS4A." evidence="29">
    <original>T</original>
    <variation>S</variation>
    <location>
        <position position="885"/>
    </location>
</feature>
<feature type="sequence variant" id="VAR_023677" description="In PEOB1; dbSNP:rs763393580." evidence="13">
    <original>A</original>
    <variation>T</variation>
    <location>
        <position position="889"/>
    </location>
</feature>
<feature type="sequence variant" id="VAR_058892" description="In MTDPS4A; dbSNP:rs139590686." evidence="29 31 37">
    <original>T</original>
    <variation>P</variation>
    <location>
        <position position="914"/>
    </location>
</feature>
<feature type="sequence variant" id="VAR_023678" description="In PEOA1." evidence="8">
    <original>G</original>
    <variation>D</variation>
    <location>
        <position position="923"/>
    </location>
</feature>
<feature type="sequence variant" id="VAR_023679" description="In SANDO and PEOB1; sporadic case; dbSNP:rs121918048." evidence="14 16">
    <original>H</original>
    <variation>Y</variation>
    <location>
        <position position="932"/>
    </location>
</feature>
<feature type="sequence variant" id="VAR_088689" description="In PEOB1; likely pathogenic." evidence="41">
    <original>R</original>
    <variation>C</variation>
    <location>
        <position position="943"/>
    </location>
</feature>
<feature type="sequence variant" id="VAR_023680" description="In PEOA1." evidence="8">
    <original>R</original>
    <variation>H</variation>
    <location>
        <position position="943"/>
    </location>
</feature>
<feature type="sequence variant" id="VAR_023681" description="In PEOA1; dbSNP:rs11546842." evidence="20">
    <original>R</original>
    <variation>C</variation>
    <location>
        <position position="953"/>
    </location>
</feature>
<feature type="sequence variant" id="VAR_012156" description="In PEOA1, PEOB1 and SANDO; 45-fold decrease in apparent binding affinity for the incoming nucleoside triphosphate; 2-fold less accurate for basepair substitutions than wild-type; dbSNP:rs113994099." evidence="3 7 8 9 20">
    <original>Y</original>
    <variation>C</variation>
    <location>
        <position position="955"/>
    </location>
</feature>
<feature type="sequence variant" id="VAR_058893" description="In MTDPS4A." evidence="23">
    <original>A</original>
    <variation>P</variation>
    <location>
        <position position="957"/>
    </location>
</feature>
<feature type="sequence variant" id="VAR_023682" description="In PEOA1; dbSNP:rs121918051." evidence="8">
    <original>A</original>
    <variation>S</variation>
    <location>
        <position position="957"/>
    </location>
</feature>
<feature type="sequence variant" id="VAR_088690" description="In MTDPS4A; likely pathogenic." evidence="42">
    <original>L</original>
    <variation>R</variation>
    <location>
        <position position="966"/>
    </location>
</feature>
<feature type="sequence variant" id="VAR_023683" description="In PEOB1; sporadic case; dbSNP:rs768028281." evidence="10">
    <original>R</original>
    <variation>Q</variation>
    <location>
        <position position="1047"/>
    </location>
</feature>
<feature type="sequence variant" id="VAR_023684" description="In SANDO; dbSNP:rs121918049." evidence="16">
    <original>G</original>
    <variation>R</variation>
    <location>
        <position position="1051"/>
    </location>
</feature>
<feature type="sequence variant" id="VAR_023685" description="In PEOB1." evidence="13">
    <original>G</original>
    <variation>V</variation>
    <location>
        <position position="1076"/>
    </location>
</feature>
<feature type="sequence variant" id="VAR_023686" description="In PEOB1 and MTDPS4A; dbSNP:rs201732356." evidence="10 43">
    <original>R</original>
    <variation>C</variation>
    <location>
        <position position="1096"/>
    </location>
</feature>
<feature type="sequence variant" id="VAR_058894" description="In MTDPS4A; dbSNP:rs368435864." evidence="29">
    <original>R</original>
    <variation>H</variation>
    <location>
        <position position="1096"/>
    </location>
</feature>
<feature type="sequence variant" id="VAR_023687" description="In PEOB1; sporadic case; dbSNP:rs1010372555." evidence="10">
    <original>S</original>
    <variation>C</variation>
    <location>
        <position position="1104"/>
    </location>
</feature>
<feature type="sequence variant" id="VAR_023688" description="In PEOB1; dbSNP:rs753410045." evidence="20">
    <original>A</original>
    <variation>T</variation>
    <location>
        <position position="1105"/>
    </location>
</feature>
<feature type="sequence variant" id="VAR_023689" description="In PEOB1." evidence="19">
    <original>V</original>
    <variation>I</variation>
    <location>
        <position position="1106"/>
    </location>
</feature>
<feature type="sequence variant" id="VAR_058895" description="In MTDPS4A." evidence="37">
    <original>H</original>
    <variation>Y</variation>
    <location>
        <position position="1110"/>
    </location>
</feature>
<feature type="sequence variant" id="VAR_058896" description="In MTDPS4A." evidence="37">
    <original>H</original>
    <variation>R</variation>
    <location>
        <position position="1134"/>
    </location>
</feature>
<feature type="sequence variant" id="VAR_065092" description="In MTDPS4A; dbSNP:rs56047213." evidence="37">
    <original>E</original>
    <variation>K</variation>
    <location>
        <position position="1136"/>
    </location>
</feature>
<feature type="sequence variant" id="VAR_014908" description="In dbSNP:rs2307442." evidence="52">
    <original>R</original>
    <variation>W</variation>
    <location>
        <position position="1142"/>
    </location>
</feature>
<feature type="sequence variant" id="VAR_014909" description="In dbSNP:rs2307441." evidence="14 21 23 27 31 37 52">
    <original>E</original>
    <variation>G</variation>
    <location>
        <position position="1143"/>
    </location>
</feature>
<feature type="sequence variant" id="VAR_014910" description="In PEOB1; uncertain significance; dbSNP:rs2307440." evidence="28 52">
    <original>R</original>
    <variation>C</variation>
    <location>
        <position position="1146"/>
    </location>
</feature>
<feature type="sequence variant" id="VAR_023690" description="In PEOA1; dbSNP:rs776031396." evidence="8 19">
    <original>S</original>
    <variation>L</variation>
    <location>
        <position position="1176"/>
    </location>
</feature>
<feature type="sequence variant" id="VAR_058897" description="In PEOB1; dbSNP:rs1131691575." evidence="28">
    <original>D</original>
    <variation>N</variation>
    <location>
        <position position="1184"/>
    </location>
</feature>
<feature type="sequence variant" id="VAR_065119" description="In PEOA1." evidence="36">
    <original>D</original>
    <variation>H</variation>
    <location>
        <position position="1186"/>
    </location>
</feature>
<feature type="sequence variant" id="VAR_058898" description="In MTDPS4A; dbSNP:rs1085307741." evidence="29">
    <original>K</original>
    <variation>N</variation>
    <location>
        <position position="1191"/>
    </location>
</feature>
<feature type="sequence variant" id="VAR_014911" description="In dbSNP:rs3087374." evidence="13 14 25 31 37 52">
    <original>Q</original>
    <variation>H</variation>
    <location>
        <position position="1236"/>
    </location>
</feature>
<feature type="mutagenesis site" description="Abolishes exonuclease activity; when associated with A-200. Decreases polymerase exonucleolytic proofreading by 30-fold for the T:G mismatch and by 14-fold for the A:A mismatch; when associated with A-200. Significantly increases mitochondrial DNA mutation frequency. Does not affect DNA polymerase activity." evidence="2 6 48">
    <original>D</original>
    <variation>A</variation>
    <location>
        <position position="198"/>
    </location>
</feature>
<feature type="mutagenesis site" description="Abolishes exonuclease activity; when associated with A-198. Decreases polymerase exonucleolytic proofreading by 30-fold for the T:G mismatch and by 14-fold for the A:A mismatch; when associated with A-198." evidence="4 6 48">
    <original>E</original>
    <variation>A</variation>
    <location>
        <position position="200"/>
    </location>
</feature>
<feature type="mutagenesis site" description="Unable to idle at the 5'-end of the nascent DNA strand. Continues DNA synthesis into double-stranded DNA past the 5'-end creating a flap structure that cannot be ligated." evidence="45">
    <original>D</original>
    <variation>A</variation>
    <location>
        <position position="274"/>
    </location>
</feature>
<feature type="mutagenesis site" description="Decreases processive DNA synthesis." evidence="44">
    <original>K</original>
    <variation>C</variation>
    <location>
        <position position="498"/>
    </location>
</feature>
<feature type="mutagenesis site" description="Decreases processive DNA synthesis." evidence="44">
    <original>K</original>
    <variation>C</variation>
    <location>
        <position position="499"/>
    </location>
</feature>
<feature type="mutagenesis site" description="Decreases processive DNA synthesis." evidence="44">
    <original>K</original>
    <variation>C</variation>
    <location>
        <position position="501"/>
    </location>
</feature>
<feature type="mutagenesis site" description="Markedly decreases the stimulation by POLG2, resulting in impaired processive DNA synthesis." evidence="39">
    <location>
        <begin position="543"/>
        <end position="558"/>
    </location>
</feature>
<feature type="mutagenesis site" description="Decreases processive DNA synthesis." evidence="39">
    <original>L</original>
    <variation>N</variation>
    <location>
        <position position="549"/>
    </location>
</feature>
<feature type="mutagenesis site" description="Decreases processive DNA synthesis." evidence="39">
    <original>L</original>
    <variation>N</variation>
    <location>
        <position position="552"/>
    </location>
</feature>
<feature type="mutagenesis site" description="Decreases processive DNA synthesis." evidence="39">
    <original>K</original>
    <variation>N</variation>
    <location>
        <position position="553"/>
    </location>
</feature>
<feature type="mutagenesis site" description="Abolishes primer DNA extention in the presence of dNTPs. Impairs intrinsic polymerase processivity. Enhances exonuclease activity leading to primer DNA degradation." evidence="48">
    <original>R</original>
    <variation>A</variation>
    <location>
        <position position="853"/>
    </location>
</feature>
<feature type="mutagenesis site" description="Abolishes DNA polymerase activity." evidence="2">
    <original>D</original>
    <variation>N</variation>
    <location>
        <position position="890"/>
    </location>
</feature>
<feature type="mutagenesis site" description="Abolishes DNA polymerase activity." evidence="2">
    <original>D</original>
    <variation>N</variation>
    <location>
        <position position="1135"/>
    </location>
</feature>
<feature type="helix" evidence="70">
    <location>
        <begin position="73"/>
        <end position="75"/>
    </location>
</feature>
<feature type="strand" evidence="69">
    <location>
        <begin position="76"/>
        <end position="78"/>
    </location>
</feature>
<feature type="helix" evidence="70">
    <location>
        <begin position="81"/>
        <end position="87"/>
    </location>
</feature>
<feature type="helix" evidence="70">
    <location>
        <begin position="97"/>
        <end position="110"/>
    </location>
</feature>
<feature type="strand" evidence="63">
    <location>
        <begin position="114"/>
        <end position="116"/>
    </location>
</feature>
<feature type="strand" evidence="70">
    <location>
        <begin position="132"/>
        <end position="134"/>
    </location>
</feature>
<feature type="helix" evidence="70">
    <location>
        <begin position="135"/>
        <end position="157"/>
    </location>
</feature>
<feature type="strand" evidence="70">
    <location>
        <begin position="172"/>
        <end position="178"/>
    </location>
</feature>
<feature type="helix" evidence="70">
    <location>
        <begin position="180"/>
        <end position="182"/>
    </location>
</feature>
<feature type="strand" evidence="70">
    <location>
        <begin position="184"/>
        <end position="186"/>
    </location>
</feature>
<feature type="strand" evidence="70">
    <location>
        <begin position="193"/>
        <end position="200"/>
    </location>
</feature>
<feature type="turn" evidence="70">
    <location>
        <begin position="203"/>
        <end position="205"/>
    </location>
</feature>
<feature type="strand" evidence="63">
    <location>
        <begin position="207"/>
        <end position="210"/>
    </location>
</feature>
<feature type="strand" evidence="70">
    <location>
        <begin position="211"/>
        <end position="215"/>
    </location>
</feature>
<feature type="strand" evidence="70">
    <location>
        <begin position="220"/>
        <end position="224"/>
    </location>
</feature>
<feature type="helix" evidence="70">
    <location>
        <begin position="226"/>
        <end position="229"/>
    </location>
</feature>
<feature type="strand" evidence="70">
    <location>
        <begin position="237"/>
        <end position="239"/>
    </location>
</feature>
<feature type="helix" evidence="70">
    <location>
        <begin position="241"/>
        <end position="243"/>
    </location>
</feature>
<feature type="helix" evidence="63">
    <location>
        <begin position="248"/>
        <end position="251"/>
    </location>
</feature>
<feature type="strand" evidence="63">
    <location>
        <begin position="254"/>
        <end position="256"/>
    </location>
</feature>
<feature type="strand" evidence="63">
    <location>
        <begin position="260"/>
        <end position="262"/>
    </location>
</feature>
<feature type="strand" evidence="70">
    <location>
        <begin position="265"/>
        <end position="270"/>
    </location>
</feature>
<feature type="helix" evidence="70">
    <location>
        <begin position="271"/>
        <end position="275"/>
    </location>
</feature>
<feature type="helix" evidence="70">
    <location>
        <begin position="279"/>
        <end position="282"/>
    </location>
</feature>
<feature type="strand" evidence="70">
    <location>
        <begin position="283"/>
        <end position="285"/>
    </location>
</feature>
<feature type="strand" evidence="70">
    <location>
        <begin position="290"/>
        <end position="293"/>
    </location>
</feature>
<feature type="helix" evidence="70">
    <location>
        <begin position="294"/>
        <end position="300"/>
    </location>
</feature>
<feature type="helix" evidence="70">
    <location>
        <begin position="306"/>
        <end position="314"/>
    </location>
</feature>
<feature type="helix" evidence="70">
    <location>
        <begin position="347"/>
        <end position="350"/>
    </location>
</feature>
<feature type="helix" evidence="70">
    <location>
        <begin position="356"/>
        <end position="363"/>
    </location>
</feature>
<feature type="helix" evidence="70">
    <location>
        <begin position="376"/>
        <end position="379"/>
    </location>
</feature>
<feature type="helix" evidence="70">
    <location>
        <begin position="382"/>
        <end position="387"/>
    </location>
</feature>
<feature type="helix" evidence="70">
    <location>
        <begin position="389"/>
        <end position="417"/>
    </location>
</feature>
<feature type="helix" evidence="70">
    <location>
        <begin position="421"/>
        <end position="430"/>
    </location>
</feature>
<feature type="strand" evidence="70">
    <location>
        <begin position="435"/>
        <end position="438"/>
    </location>
</feature>
<feature type="helix" evidence="70">
    <location>
        <begin position="440"/>
        <end position="470"/>
    </location>
</feature>
<feature type="helix" evidence="70">
    <location>
        <begin position="471"/>
        <end position="481"/>
    </location>
</feature>
<feature type="turn" evidence="70">
    <location>
        <begin position="483"/>
        <end position="487"/>
    </location>
</feature>
<feature type="strand" evidence="65">
    <location>
        <begin position="503"/>
        <end position="505"/>
    </location>
</feature>
<feature type="strand" evidence="63">
    <location>
        <begin position="519"/>
        <end position="521"/>
    </location>
</feature>
<feature type="helix" evidence="70">
    <location>
        <begin position="538"/>
        <end position="553"/>
    </location>
</feature>
<feature type="helix" evidence="70">
    <location>
        <begin position="554"/>
        <end position="558"/>
    </location>
</feature>
<feature type="strand" evidence="63">
    <location>
        <begin position="559"/>
        <end position="561"/>
    </location>
</feature>
<feature type="strand" evidence="67">
    <location>
        <begin position="567"/>
        <end position="569"/>
    </location>
</feature>
<feature type="helix" evidence="70">
    <location>
        <begin position="571"/>
        <end position="575"/>
    </location>
</feature>
<feature type="strand" evidence="70">
    <location>
        <begin position="587"/>
        <end position="589"/>
    </location>
</feature>
<feature type="strand" evidence="68">
    <location>
        <begin position="594"/>
        <end position="598"/>
    </location>
</feature>
<feature type="helix" evidence="70">
    <location>
        <begin position="599"/>
        <end position="602"/>
    </location>
</feature>
<feature type="strand" evidence="72">
    <location>
        <begin position="606"/>
        <end position="609"/>
    </location>
</feature>
<feature type="strand" evidence="70">
    <location>
        <begin position="610"/>
        <end position="615"/>
    </location>
</feature>
<feature type="turn" evidence="70">
    <location>
        <begin position="616"/>
        <end position="618"/>
    </location>
</feature>
<feature type="strand" evidence="70">
    <location>
        <begin position="619"/>
        <end position="624"/>
    </location>
</feature>
<feature type="turn" evidence="67">
    <location>
        <begin position="628"/>
        <end position="630"/>
    </location>
</feature>
<feature type="helix" evidence="63">
    <location>
        <begin position="636"/>
        <end position="644"/>
    </location>
</feature>
<feature type="turn" evidence="70">
    <location>
        <begin position="648"/>
        <end position="650"/>
    </location>
</feature>
<feature type="helix" evidence="70">
    <location>
        <begin position="651"/>
        <end position="662"/>
    </location>
</feature>
<feature type="helix" evidence="63">
    <location>
        <begin position="716"/>
        <end position="721"/>
    </location>
</feature>
<feature type="strand" evidence="68">
    <location>
        <begin position="739"/>
        <end position="742"/>
    </location>
</feature>
<feature type="strand" evidence="64">
    <location>
        <begin position="743"/>
        <end position="745"/>
    </location>
</feature>
<feature type="strand" evidence="70">
    <location>
        <begin position="748"/>
        <end position="751"/>
    </location>
</feature>
<feature type="turn" evidence="63">
    <location>
        <begin position="755"/>
        <end position="757"/>
    </location>
</feature>
<feature type="strand" evidence="72">
    <location>
        <begin position="765"/>
        <end position="767"/>
    </location>
</feature>
<feature type="helix" evidence="70">
    <location>
        <begin position="768"/>
        <end position="770"/>
    </location>
</feature>
<feature type="helix" evidence="70">
    <location>
        <begin position="771"/>
        <end position="775"/>
    </location>
</feature>
<feature type="strand" evidence="70">
    <location>
        <begin position="778"/>
        <end position="780"/>
    </location>
</feature>
<feature type="turn" evidence="68">
    <location>
        <begin position="782"/>
        <end position="784"/>
    </location>
</feature>
<feature type="helix" evidence="70">
    <location>
        <begin position="787"/>
        <end position="809"/>
    </location>
</feature>
<feature type="strand" evidence="69">
    <location>
        <begin position="814"/>
        <end position="816"/>
    </location>
</feature>
<feature type="helix" evidence="70">
    <location>
        <begin position="818"/>
        <end position="820"/>
    </location>
</feature>
<feature type="helix" evidence="70">
    <location>
        <begin position="823"/>
        <end position="826"/>
    </location>
</feature>
<feature type="strand" evidence="72">
    <location>
        <begin position="833"/>
        <end position="835"/>
    </location>
</feature>
<feature type="strand" evidence="70">
    <location>
        <begin position="837"/>
        <end position="840"/>
    </location>
</feature>
<feature type="strand" evidence="64">
    <location>
        <begin position="845"/>
        <end position="848"/>
    </location>
</feature>
<feature type="turn" evidence="63">
    <location>
        <begin position="849"/>
        <end position="851"/>
    </location>
</feature>
<feature type="strand" evidence="64">
    <location>
        <begin position="853"/>
        <end position="855"/>
    </location>
</feature>
<feature type="helix" evidence="70">
    <location>
        <begin position="859"/>
        <end position="861"/>
    </location>
</feature>
<feature type="strand" evidence="67">
    <location>
        <begin position="867"/>
        <end position="869"/>
    </location>
</feature>
<feature type="helix" evidence="70">
    <location>
        <begin position="872"/>
        <end position="877"/>
    </location>
</feature>
<feature type="strand" evidence="70">
    <location>
        <begin position="884"/>
        <end position="890"/>
    </location>
</feature>
<feature type="helix" evidence="70">
    <location>
        <begin position="894"/>
        <end position="907"/>
    </location>
</feature>
<feature type="strand" evidence="68">
    <location>
        <begin position="909"/>
        <end position="911"/>
    </location>
</feature>
<feature type="helix" evidence="70">
    <location>
        <begin position="915"/>
        <end position="922"/>
    </location>
</feature>
<feature type="strand" evidence="70">
    <location>
        <begin position="925"/>
        <end position="928"/>
    </location>
</feature>
<feature type="helix" evidence="70">
    <location>
        <begin position="931"/>
        <end position="938"/>
    </location>
</feature>
<feature type="helix" evidence="70">
    <location>
        <begin position="943"/>
        <end position="954"/>
    </location>
</feature>
<feature type="helix" evidence="70">
    <location>
        <begin position="959"/>
        <end position="969"/>
    </location>
</feature>
<feature type="strand" evidence="71">
    <location>
        <begin position="971"/>
        <end position="973"/>
    </location>
</feature>
<feature type="helix" evidence="70">
    <location>
        <begin position="975"/>
        <end position="989"/>
    </location>
</feature>
<feature type="strand" evidence="70">
    <location>
        <begin position="991"/>
        <end position="993"/>
    </location>
</feature>
<feature type="strand" evidence="63">
    <location>
        <begin position="997"/>
        <end position="999"/>
    </location>
</feature>
<feature type="helix" evidence="63">
    <location>
        <begin position="1001"/>
        <end position="1009"/>
    </location>
</feature>
<feature type="strand" evidence="63">
    <location>
        <begin position="1010"/>
        <end position="1013"/>
    </location>
</feature>
<feature type="helix" evidence="63">
    <location>
        <begin position="1027"/>
        <end position="1030"/>
    </location>
</feature>
<feature type="strand" evidence="63">
    <location>
        <begin position="1033"/>
        <end position="1035"/>
    </location>
</feature>
<feature type="helix" evidence="63">
    <location>
        <begin position="1037"/>
        <end position="1040"/>
    </location>
</feature>
<feature type="turn" evidence="63">
    <location>
        <begin position="1041"/>
        <end position="1046"/>
    </location>
</feature>
<feature type="strand" evidence="70">
    <location>
        <begin position="1050"/>
        <end position="1052"/>
    </location>
</feature>
<feature type="helix" evidence="70">
    <location>
        <begin position="1055"/>
        <end position="1066"/>
    </location>
</feature>
<feature type="strand" evidence="70">
    <location>
        <begin position="1067"/>
        <end position="1069"/>
    </location>
</feature>
<feature type="turn" evidence="70">
    <location>
        <begin position="1073"/>
        <end position="1075"/>
    </location>
</feature>
<feature type="helix" evidence="70">
    <location>
        <begin position="1081"/>
        <end position="1083"/>
    </location>
</feature>
<feature type="turn" evidence="70">
    <location>
        <begin position="1085"/>
        <end position="1087"/>
    </location>
</feature>
<feature type="strand" evidence="68">
    <location>
        <begin position="1089"/>
        <end position="1092"/>
    </location>
</feature>
<feature type="helix" evidence="70">
    <location>
        <begin position="1093"/>
        <end position="1122"/>
    </location>
</feature>
<feature type="strand" evidence="70">
    <location>
        <begin position="1127"/>
        <end position="1132"/>
    </location>
</feature>
<feature type="strand" evidence="70">
    <location>
        <begin position="1134"/>
        <end position="1142"/>
    </location>
</feature>
<feature type="helix" evidence="70">
    <location>
        <begin position="1143"/>
        <end position="1145"/>
    </location>
</feature>
<feature type="helix" evidence="70">
    <location>
        <begin position="1146"/>
        <end position="1167"/>
    </location>
</feature>
<feature type="helix" evidence="70">
    <location>
        <begin position="1175"/>
        <end position="1177"/>
    </location>
</feature>
<feature type="strand" evidence="70">
    <location>
        <begin position="1183"/>
        <end position="1188"/>
    </location>
</feature>
<feature type="strand" evidence="66">
    <location>
        <begin position="1191"/>
        <end position="1194"/>
    </location>
</feature>
<feature type="strand" evidence="66">
    <location>
        <begin position="1202"/>
        <end position="1204"/>
    </location>
</feature>
<feature type="helix" evidence="70">
    <location>
        <begin position="1206"/>
        <end position="1209"/>
    </location>
</feature>
<feature type="strand" evidence="70">
    <location>
        <begin position="1216"/>
        <end position="1218"/>
    </location>
</feature>
<feature type="helix" evidence="70">
    <location>
        <begin position="1220"/>
        <end position="1227"/>
    </location>
</feature>
<feature type="strand" evidence="63">
    <location>
        <begin position="1232"/>
        <end position="1235"/>
    </location>
</feature>
<organism>
    <name type="scientific">Homo sapiens</name>
    <name type="common">Human</name>
    <dbReference type="NCBI Taxonomy" id="9606"/>
    <lineage>
        <taxon>Eukaryota</taxon>
        <taxon>Metazoa</taxon>
        <taxon>Chordata</taxon>
        <taxon>Craniata</taxon>
        <taxon>Vertebrata</taxon>
        <taxon>Euteleostomi</taxon>
        <taxon>Mammalia</taxon>
        <taxon>Eutheria</taxon>
        <taxon>Euarchontoglires</taxon>
        <taxon>Primates</taxon>
        <taxon>Haplorrhini</taxon>
        <taxon>Catarrhini</taxon>
        <taxon>Hominidae</taxon>
        <taxon>Homo</taxon>
    </lineage>
</organism>
<name>DPOG1_HUMAN</name>
<sequence>MSRLLWRKVAGATVGPGPVPAPGRWVSSSVPASDPSDGQRRRQQQQQQQQQQQQQPQQPQVLSSEGGQLRHNPLDIQMLSRGLHEQIFGQGGEMPGEAAVRRSVEHLQKHGLWGQPAVPLPDVELRLPPLYGDNLDQHFRLLAQKQSLPYLEAANLLLQAQLPPKPPAWAWAEGWTRYGPEGEAVPVAIPEERALVFDVEVCLAEGTCPTLAVAISPSAWYSWCSQRLVEERYSWTSQLSPADLIPLEVPTGASSPTQRDWQEQLVVGHNVSFDRAHIREQYLIQGSRMRFLDTMSMHMAISGLSSFQRSLWIAAKQGKHKVQPPTKQGQKSQRKARRGPAISSWDWLDISSVNSLAEVHRLYVGGPPLEKEPRELFVKGTMKDIRENFQDLMQYCAQDVWATHEVFQQQLPLFLERCPHPVTLAGMLEMGVSYLPVNQNWERYLAEAQGTYEELQREMKKSLMDLANDACQLLSGERYKEDPWLWDLEWDLQEFKQKKAKKVKKEPATASKLPIEGAGAPGDPMDQEDLGPCSEEEEFQQDVMARACLQKLKGTTELLPKRPQHLPGHPGWYRKLCPRLDDPAWTPGPSLLSLQMRVTPKLMALTWDGFPLHYSERHGWGYLVPGRRDNLAKLPTGTTLESAGVVCPYRAIESLYRKHCLEQGKQQLMPQEAGLAEEFLLTDNSAIWQTVEELDYLEVEAEAKMENLRAAVPGQPLALTARGGPKDTQPSYHHGNGPYNDVDIPGCWFFKLPHKDGNSCNVGSPFAKDFLPKMEDGTLQAGPGGASGPRALEINKMISFWRNAHKRISSQMVVWLPRSALPRAVIRHPDYDEEGLYGAILPQVVTAGTITRRAVEPTWLTASNARPDRVGSELKAMVQAPPGYTLVGADVDSQELWIAAVLGDAHFAGMHGCTAFGWMTLQGRKSRGTDLHSKTATTVGISREHAKIFNYGRIYGAGQPFAERLLMQFNHRLTQQEAAEKAQQMYAATKGLRWYRLSDEGEWLVRELNLPVDRTEGGWISLQDLRKVQRETARKSQWKKWEVVAERAWKGGTESEMFNKLESIATSDIPRTPVLGCCISRALEPSAVQEEFMTSRVNWVVQSSAVDYLHLMLVAMKWLFEEFAIDGRFCISIHDEVRYLVREEDRYRAALALQITNLLTRCMFAYKLGLNDLPQSVAFFSAVDIDRCLRKEVTMDCKTPSNPTGMERRYGIPQGEALDIYQIIELTKGSLEKRSQPGP</sequence>
<dbReference type="EC" id="2.7.7.7" evidence="2 18 39 49"/>
<dbReference type="EC" id="3.1.11.-" evidence="2 5 7 45 49"/>
<dbReference type="EC" id="4.2.99.-" evidence="50"/>
<dbReference type="EMBL" id="U60325">
    <property type="protein sequence ID" value="AAC50712.1"/>
    <property type="molecule type" value="mRNA"/>
</dbReference>
<dbReference type="EMBL" id="X98093">
    <property type="protein sequence ID" value="CAA66719.1"/>
    <property type="molecule type" value="mRNA"/>
</dbReference>
<dbReference type="EMBL" id="D84103">
    <property type="protein sequence ID" value="BAA12223.1"/>
    <property type="molecule type" value="mRNA"/>
</dbReference>
<dbReference type="EMBL" id="AF497906">
    <property type="protein sequence ID" value="AAM77583.1"/>
    <property type="molecule type" value="Genomic_DNA"/>
</dbReference>
<dbReference type="EMBL" id="BC042571">
    <property type="protein sequence ID" value="AAH42571.1"/>
    <property type="molecule type" value="mRNA"/>
</dbReference>
<dbReference type="EMBL" id="BC050559">
    <property type="protein sequence ID" value="AAH50559.1"/>
    <property type="molecule type" value="mRNA"/>
</dbReference>
<dbReference type="CCDS" id="CCDS10350.1"/>
<dbReference type="PIR" id="G02750">
    <property type="entry name" value="G02750"/>
</dbReference>
<dbReference type="RefSeq" id="NP_001119603.1">
    <property type="nucleotide sequence ID" value="NM_001126131.2"/>
</dbReference>
<dbReference type="RefSeq" id="NP_002684.1">
    <property type="nucleotide sequence ID" value="NM_002693.3"/>
</dbReference>
<dbReference type="PDB" id="3IKM">
    <property type="method" value="X-ray"/>
    <property type="resolution" value="3.24 A"/>
    <property type="chains" value="A/D=70-1239"/>
</dbReference>
<dbReference type="PDB" id="4ZTU">
    <property type="method" value="X-ray"/>
    <property type="resolution" value="3.30 A"/>
    <property type="chains" value="A=30-1239"/>
</dbReference>
<dbReference type="PDB" id="4ZTZ">
    <property type="method" value="X-ray"/>
    <property type="resolution" value="3.44 A"/>
    <property type="chains" value="A=30-1239"/>
</dbReference>
<dbReference type="PDB" id="5C51">
    <property type="method" value="X-ray"/>
    <property type="resolution" value="3.43 A"/>
    <property type="chains" value="A=25-1239"/>
</dbReference>
<dbReference type="PDB" id="5C52">
    <property type="method" value="X-ray"/>
    <property type="resolution" value="3.64 A"/>
    <property type="chains" value="A=25-1239"/>
</dbReference>
<dbReference type="PDB" id="5C53">
    <property type="method" value="X-ray"/>
    <property type="resolution" value="3.57 A"/>
    <property type="chains" value="A=25-1239"/>
</dbReference>
<dbReference type="PDB" id="8D33">
    <property type="method" value="EM"/>
    <property type="resolution" value="2.46 A"/>
    <property type="chains" value="A=1-1239"/>
</dbReference>
<dbReference type="PDB" id="8D37">
    <property type="method" value="EM"/>
    <property type="resolution" value="2.65 A"/>
    <property type="chains" value="A=1-1239"/>
</dbReference>
<dbReference type="PDB" id="8D3R">
    <property type="method" value="EM"/>
    <property type="resolution" value="3.04 A"/>
    <property type="chains" value="A=1-1239"/>
</dbReference>
<dbReference type="PDB" id="8D42">
    <property type="method" value="EM"/>
    <property type="resolution" value="2.91 A"/>
    <property type="chains" value="A=1-1239"/>
</dbReference>
<dbReference type="PDB" id="8G5I">
    <property type="method" value="EM"/>
    <property type="resolution" value="2.75 A"/>
    <property type="chains" value="A=1-1239"/>
</dbReference>
<dbReference type="PDB" id="8G5J">
    <property type="method" value="EM"/>
    <property type="resolution" value="2.63 A"/>
    <property type="chains" value="A=1-1239"/>
</dbReference>
<dbReference type="PDB" id="8G5K">
    <property type="method" value="EM"/>
    <property type="resolution" value="2.90 A"/>
    <property type="chains" value="A=1-1239"/>
</dbReference>
<dbReference type="PDB" id="8G5L">
    <property type="method" value="EM"/>
    <property type="resolution" value="3.00 A"/>
    <property type="chains" value="A=1-1239"/>
</dbReference>
<dbReference type="PDB" id="8G5M">
    <property type="method" value="EM"/>
    <property type="resolution" value="2.58 A"/>
    <property type="chains" value="A=1-1239"/>
</dbReference>
<dbReference type="PDB" id="8G5N">
    <property type="method" value="EM"/>
    <property type="resolution" value="2.73 A"/>
    <property type="chains" value="A=1-1239"/>
</dbReference>
<dbReference type="PDB" id="8G5O">
    <property type="method" value="EM"/>
    <property type="resolution" value="2.61 A"/>
    <property type="chains" value="A=1-1239"/>
</dbReference>
<dbReference type="PDB" id="8G5P">
    <property type="method" value="EM"/>
    <property type="resolution" value="2.78 A"/>
    <property type="chains" value="A=1-1239"/>
</dbReference>
<dbReference type="PDB" id="8T7E">
    <property type="method" value="EM"/>
    <property type="resolution" value="3.08 A"/>
    <property type="chains" value="A=1-1239"/>
</dbReference>
<dbReference type="PDB" id="8UDK">
    <property type="method" value="X-ray"/>
    <property type="resolution" value="3.43 A"/>
    <property type="chains" value="A=1-1239"/>
</dbReference>
<dbReference type="PDB" id="8UDL">
    <property type="method" value="EM"/>
    <property type="resolution" value="2.37 A"/>
    <property type="chains" value="A=1-1239"/>
</dbReference>
<dbReference type="PDB" id="8V54">
    <property type="method" value="EM"/>
    <property type="resolution" value="4.10 A"/>
    <property type="chains" value="A=26-1239"/>
</dbReference>
<dbReference type="PDB" id="8V55">
    <property type="method" value="EM"/>
    <property type="resolution" value="4.20 A"/>
    <property type="chains" value="A=26-1239"/>
</dbReference>
<dbReference type="PDB" id="8V5D">
    <property type="method" value="EM"/>
    <property type="resolution" value="3.00 A"/>
    <property type="chains" value="A=26-1239"/>
</dbReference>
<dbReference type="PDB" id="8V5R">
    <property type="method" value="EM"/>
    <property type="resolution" value="3.00 A"/>
    <property type="chains" value="A=26-1239"/>
</dbReference>
<dbReference type="PDBsum" id="3IKM"/>
<dbReference type="PDBsum" id="4ZTU"/>
<dbReference type="PDBsum" id="4ZTZ"/>
<dbReference type="PDBsum" id="5C51"/>
<dbReference type="PDBsum" id="5C52"/>
<dbReference type="PDBsum" id="5C53"/>
<dbReference type="PDBsum" id="8D33"/>
<dbReference type="PDBsum" id="8D37"/>
<dbReference type="PDBsum" id="8D3R"/>
<dbReference type="PDBsum" id="8D42"/>
<dbReference type="PDBsum" id="8G5I"/>
<dbReference type="PDBsum" id="8G5J"/>
<dbReference type="PDBsum" id="8G5K"/>
<dbReference type="PDBsum" id="8G5L"/>
<dbReference type="PDBsum" id="8G5M"/>
<dbReference type="PDBsum" id="8G5N"/>
<dbReference type="PDBsum" id="8G5O"/>
<dbReference type="PDBsum" id="8G5P"/>
<dbReference type="PDBsum" id="8T7E"/>
<dbReference type="PDBsum" id="8UDK"/>
<dbReference type="PDBsum" id="8UDL"/>
<dbReference type="PDBsum" id="8V54"/>
<dbReference type="PDBsum" id="8V55"/>
<dbReference type="PDBsum" id="8V5D"/>
<dbReference type="PDBsum" id="8V5R"/>
<dbReference type="EMDB" id="EMD-27154"/>
<dbReference type="EMDB" id="EMD-27155"/>
<dbReference type="EMDB" id="EMD-27163"/>
<dbReference type="EMDB" id="EMD-27172"/>
<dbReference type="EMDB" id="EMD-29745"/>
<dbReference type="EMDB" id="EMD-29746"/>
<dbReference type="EMDB" id="EMD-29747"/>
<dbReference type="EMDB" id="EMD-29748"/>
<dbReference type="EMDB" id="EMD-29749"/>
<dbReference type="EMDB" id="EMD-29750"/>
<dbReference type="EMDB" id="EMD-29751"/>
<dbReference type="EMDB" id="EMD-29752"/>
<dbReference type="EMDB" id="EMD-41091"/>
<dbReference type="EMDB" id="EMD-42150"/>
<dbReference type="EMDB" id="EMD-42842"/>
<dbReference type="EMDB" id="EMD-42979"/>
<dbReference type="EMDB" id="EMD-42980"/>
<dbReference type="EMDB" id="EMD-42982"/>
<dbReference type="EMDB" id="EMD-42984"/>
<dbReference type="SMR" id="P54098"/>
<dbReference type="BioGRID" id="111424">
    <property type="interactions" value="115"/>
</dbReference>
<dbReference type="ComplexPortal" id="CPX-2093">
    <property type="entry name" value="Mitochondrial DNA polymerase gamma complex"/>
</dbReference>
<dbReference type="FunCoup" id="P54098">
    <property type="interactions" value="1006"/>
</dbReference>
<dbReference type="IntAct" id="P54098">
    <property type="interactions" value="62"/>
</dbReference>
<dbReference type="MINT" id="P54098"/>
<dbReference type="STRING" id="9606.ENSP00000399851"/>
<dbReference type="BindingDB" id="P54098"/>
<dbReference type="ChEMBL" id="CHEMBL2732"/>
<dbReference type="DrugBank" id="DB12151">
    <property type="generic name" value="Brincidofovir"/>
</dbReference>
<dbReference type="DrugCentral" id="P54098"/>
<dbReference type="GlyGen" id="P54098">
    <property type="glycosylation" value="1 site, 1 O-linked glycan (1 site)"/>
</dbReference>
<dbReference type="iPTMnet" id="P54098"/>
<dbReference type="PhosphoSitePlus" id="P54098"/>
<dbReference type="SwissPalm" id="P54098"/>
<dbReference type="BioMuta" id="POLG"/>
<dbReference type="DMDM" id="1706507"/>
<dbReference type="jPOST" id="P54098"/>
<dbReference type="MassIVE" id="P54098"/>
<dbReference type="PaxDb" id="9606-ENSP00000268124"/>
<dbReference type="PeptideAtlas" id="P54098"/>
<dbReference type="ProteomicsDB" id="56642"/>
<dbReference type="Pumba" id="P54098"/>
<dbReference type="Antibodypedia" id="28558">
    <property type="antibodies" value="218 antibodies from 34 providers"/>
</dbReference>
<dbReference type="DNASU" id="5428"/>
<dbReference type="Ensembl" id="ENST00000268124.11">
    <property type="protein sequence ID" value="ENSP00000268124.5"/>
    <property type="gene ID" value="ENSG00000140521.18"/>
</dbReference>
<dbReference type="Ensembl" id="ENST00000442287.6">
    <property type="protein sequence ID" value="ENSP00000399851.2"/>
    <property type="gene ID" value="ENSG00000140521.18"/>
</dbReference>
<dbReference type="Ensembl" id="ENST00000636937.2">
    <property type="protein sequence ID" value="ENSP00000516154.1"/>
    <property type="gene ID" value="ENSG00000140521.18"/>
</dbReference>
<dbReference type="GeneID" id="5428"/>
<dbReference type="KEGG" id="hsa:5428"/>
<dbReference type="MANE-Select" id="ENST00000268124.11">
    <property type="protein sequence ID" value="ENSP00000268124.5"/>
    <property type="RefSeq nucleotide sequence ID" value="NM_002693.3"/>
    <property type="RefSeq protein sequence ID" value="NP_002684.1"/>
</dbReference>
<dbReference type="UCSC" id="uc002bnr.5">
    <property type="organism name" value="human"/>
</dbReference>
<dbReference type="AGR" id="HGNC:9179"/>
<dbReference type="CTD" id="5428"/>
<dbReference type="DisGeNET" id="5428"/>
<dbReference type="GeneCards" id="POLG"/>
<dbReference type="GeneReviews" id="POLG"/>
<dbReference type="HGNC" id="HGNC:9179">
    <property type="gene designation" value="POLG"/>
</dbReference>
<dbReference type="HPA" id="ENSG00000140521">
    <property type="expression patterns" value="Low tissue specificity"/>
</dbReference>
<dbReference type="MalaCards" id="POLG"/>
<dbReference type="MIM" id="157640">
    <property type="type" value="phenotype"/>
</dbReference>
<dbReference type="MIM" id="174763">
    <property type="type" value="gene"/>
</dbReference>
<dbReference type="MIM" id="203700">
    <property type="type" value="phenotype"/>
</dbReference>
<dbReference type="MIM" id="256000">
    <property type="type" value="phenotype"/>
</dbReference>
<dbReference type="MIM" id="258450">
    <property type="type" value="phenotype"/>
</dbReference>
<dbReference type="MIM" id="607459">
    <property type="type" value="phenotype"/>
</dbReference>
<dbReference type="MIM" id="613662">
    <property type="type" value="phenotype"/>
</dbReference>
<dbReference type="neXtProt" id="NX_P54098"/>
<dbReference type="OpenTargets" id="ENSG00000140521"/>
<dbReference type="Orphanet" id="726">
    <property type="disease" value="Alpers-Huttenlocher syndrome"/>
</dbReference>
<dbReference type="Orphanet" id="254892">
    <property type="disease" value="Autosomal dominant progressive external ophthalmoplegia"/>
</dbReference>
<dbReference type="Orphanet" id="254886">
    <property type="disease" value="Autosomal recessive progressive external ophthalmoplegia"/>
</dbReference>
<dbReference type="Orphanet" id="298">
    <property type="disease" value="Mitochondrial neurogastrointestinal encephalomyopathy"/>
</dbReference>
<dbReference type="Orphanet" id="402082">
    <property type="disease" value="Progressive myoclonic epilepsy type 5"/>
</dbReference>
<dbReference type="Orphanet" id="94125">
    <property type="disease" value="Recessive mitochondrial ataxia syndrome"/>
</dbReference>
<dbReference type="Orphanet" id="70595">
    <property type="disease" value="Sensory ataxic neuropathy-dysarthria-ophthalmoparesis syndrome"/>
</dbReference>
<dbReference type="Orphanet" id="254881">
    <property type="disease" value="Spinocerebellar ataxia with epilepsy"/>
</dbReference>
<dbReference type="PharmGKB" id="PA33500"/>
<dbReference type="VEuPathDB" id="HostDB:ENSG00000140521"/>
<dbReference type="eggNOG" id="KOG3657">
    <property type="taxonomic scope" value="Eukaryota"/>
</dbReference>
<dbReference type="GeneTree" id="ENSGT00390000000453"/>
<dbReference type="HOGENOM" id="CLU_001524_2_2_1"/>
<dbReference type="InParanoid" id="P54098"/>
<dbReference type="OMA" id="AMHITNL"/>
<dbReference type="OrthoDB" id="5588663at2759"/>
<dbReference type="PAN-GO" id="P54098">
    <property type="GO annotations" value="4 GO annotations based on evolutionary models"/>
</dbReference>
<dbReference type="PhylomeDB" id="P54098"/>
<dbReference type="PathwayCommons" id="P54098"/>
<dbReference type="Reactome" id="R-HSA-9913635">
    <property type="pathway name" value="Strand-asynchronous mitochondrial DNA replication"/>
</dbReference>
<dbReference type="SignaLink" id="P54098"/>
<dbReference type="SIGNOR" id="P54098"/>
<dbReference type="BioGRID-ORCS" id="5428">
    <property type="hits" value="224 hits in 1160 CRISPR screens"/>
</dbReference>
<dbReference type="ChiTaRS" id="POLG">
    <property type="organism name" value="human"/>
</dbReference>
<dbReference type="GeneWiki" id="POLG"/>
<dbReference type="GenomeRNAi" id="5428"/>
<dbReference type="Pharos" id="P54098">
    <property type="development level" value="Tchem"/>
</dbReference>
<dbReference type="PRO" id="PR:P54098"/>
<dbReference type="Proteomes" id="UP000005640">
    <property type="component" value="Chromosome 15"/>
</dbReference>
<dbReference type="RNAct" id="P54098">
    <property type="molecule type" value="protein"/>
</dbReference>
<dbReference type="Bgee" id="ENSG00000140521">
    <property type="expression patterns" value="Expressed in granulocyte and 212 other cell types or tissues"/>
</dbReference>
<dbReference type="ExpressionAtlas" id="P54098">
    <property type="expression patterns" value="baseline and differential"/>
</dbReference>
<dbReference type="GO" id="GO:0005760">
    <property type="term" value="C:gamma DNA polymerase complex"/>
    <property type="evidence" value="ECO:0000314"/>
    <property type="project" value="UniProtKB"/>
</dbReference>
<dbReference type="GO" id="GO:0043231">
    <property type="term" value="C:intracellular membrane-bounded organelle"/>
    <property type="evidence" value="ECO:0000314"/>
    <property type="project" value="HPA"/>
</dbReference>
<dbReference type="GO" id="GO:0000262">
    <property type="term" value="C:mitochondrial chromosome"/>
    <property type="evidence" value="ECO:0000314"/>
    <property type="project" value="FlyBase"/>
</dbReference>
<dbReference type="GO" id="GO:0005759">
    <property type="term" value="C:mitochondrial matrix"/>
    <property type="evidence" value="ECO:0000314"/>
    <property type="project" value="ComplexPortal"/>
</dbReference>
<dbReference type="GO" id="GO:0042645">
    <property type="term" value="C:mitochondrial nucleoid"/>
    <property type="evidence" value="ECO:0000314"/>
    <property type="project" value="BHF-UCL"/>
</dbReference>
<dbReference type="GO" id="GO:0005739">
    <property type="term" value="C:mitochondrion"/>
    <property type="evidence" value="ECO:0000314"/>
    <property type="project" value="HPA"/>
</dbReference>
<dbReference type="GO" id="GO:0032991">
    <property type="term" value="C:protein-containing complex"/>
    <property type="evidence" value="ECO:0000314"/>
    <property type="project" value="MGI"/>
</dbReference>
<dbReference type="GO" id="GO:0008408">
    <property type="term" value="F:3'-5' exonuclease activity"/>
    <property type="evidence" value="ECO:0000314"/>
    <property type="project" value="FlyBase"/>
</dbReference>
<dbReference type="GO" id="GO:0051575">
    <property type="term" value="F:5'-deoxyribose-5-phosphate lyase activity"/>
    <property type="evidence" value="ECO:0000314"/>
    <property type="project" value="UniProtKB"/>
</dbReference>
<dbReference type="GO" id="GO:0003682">
    <property type="term" value="F:chromatin binding"/>
    <property type="evidence" value="ECO:0000314"/>
    <property type="project" value="UniProtKB"/>
</dbReference>
<dbReference type="GO" id="GO:0003677">
    <property type="term" value="F:DNA binding"/>
    <property type="evidence" value="ECO:0000314"/>
    <property type="project" value="UniProtKB"/>
</dbReference>
<dbReference type="GO" id="GO:0003887">
    <property type="term" value="F:DNA-directed DNA polymerase activity"/>
    <property type="evidence" value="ECO:0000314"/>
    <property type="project" value="UniProtKB"/>
</dbReference>
<dbReference type="GO" id="GO:0002020">
    <property type="term" value="F:protease binding"/>
    <property type="evidence" value="ECO:0000353"/>
    <property type="project" value="UniProtKB"/>
</dbReference>
<dbReference type="GO" id="GO:0008310">
    <property type="term" value="F:single-stranded DNA 3'-5' DNA exonuclease activity"/>
    <property type="evidence" value="ECO:0000314"/>
    <property type="project" value="UniProtKB"/>
</dbReference>
<dbReference type="GO" id="GO:0006284">
    <property type="term" value="P:base-excision repair"/>
    <property type="evidence" value="ECO:0000314"/>
    <property type="project" value="UniProtKB"/>
</dbReference>
<dbReference type="GO" id="GO:0006287">
    <property type="term" value="P:base-excision repair, gap-filling"/>
    <property type="evidence" value="ECO:0000314"/>
    <property type="project" value="MGI"/>
</dbReference>
<dbReference type="GO" id="GO:0006259">
    <property type="term" value="P:DNA metabolic process"/>
    <property type="evidence" value="ECO:0000304"/>
    <property type="project" value="ProtInc"/>
</dbReference>
<dbReference type="GO" id="GO:0045004">
    <property type="term" value="P:DNA replication proofreading"/>
    <property type="evidence" value="ECO:0000314"/>
    <property type="project" value="UniProtKB"/>
</dbReference>
<dbReference type="GO" id="GO:0006261">
    <property type="term" value="P:DNA-templated DNA replication"/>
    <property type="evidence" value="ECO:0000314"/>
    <property type="project" value="UniProtKB"/>
</dbReference>
<dbReference type="GO" id="GO:0006264">
    <property type="term" value="P:mitochondrial DNA replication"/>
    <property type="evidence" value="ECO:0000314"/>
    <property type="project" value="ComplexPortal"/>
</dbReference>
<dbReference type="CDD" id="cd08641">
    <property type="entry name" value="DNA_pol_gammaA"/>
    <property type="match status" value="1"/>
</dbReference>
<dbReference type="FunFam" id="1.10.150.20:FF:000024">
    <property type="entry name" value="DNA polymerase gamma, catalytic subunit"/>
    <property type="match status" value="1"/>
</dbReference>
<dbReference type="FunFam" id="1.20.5.3960:FF:000002">
    <property type="entry name" value="DNA polymerase gamma, catalytic subunit"/>
    <property type="match status" value="1"/>
</dbReference>
<dbReference type="FunFam" id="3.30.420.390:FF:000001">
    <property type="entry name" value="DNA polymerase gamma, catalytic subunit"/>
    <property type="match status" value="1"/>
</dbReference>
<dbReference type="FunFam" id="3.30.420.390:FF:000002">
    <property type="entry name" value="DNA polymerase gamma, catalytic subunit"/>
    <property type="match status" value="1"/>
</dbReference>
<dbReference type="Gene3D" id="1.20.5.3960">
    <property type="match status" value="1"/>
</dbReference>
<dbReference type="Gene3D" id="3.30.420.390">
    <property type="match status" value="2"/>
</dbReference>
<dbReference type="Gene3D" id="3.30.70.370">
    <property type="match status" value="1"/>
</dbReference>
<dbReference type="Gene3D" id="1.10.150.20">
    <property type="entry name" value="5' to 3' exonuclease, C-terminal subdomain"/>
    <property type="match status" value="1"/>
</dbReference>
<dbReference type="InterPro" id="IPR019760">
    <property type="entry name" value="DNA-dir_DNA_pol_A_CS"/>
</dbReference>
<dbReference type="InterPro" id="IPR002297">
    <property type="entry name" value="DNA-dir_DNA_pol_A_mt"/>
</dbReference>
<dbReference type="InterPro" id="IPR001098">
    <property type="entry name" value="DNA-dir_DNA_pol_A_palm_dom"/>
</dbReference>
<dbReference type="InterPro" id="IPR043502">
    <property type="entry name" value="DNA/RNA_pol_sf"/>
</dbReference>
<dbReference type="InterPro" id="IPR041336">
    <property type="entry name" value="DNApol_Exo"/>
</dbReference>
<dbReference type="InterPro" id="IPR047580">
    <property type="entry name" value="POLG_palm_dom"/>
</dbReference>
<dbReference type="InterPro" id="IPR012337">
    <property type="entry name" value="RNaseH-like_sf"/>
</dbReference>
<dbReference type="PANTHER" id="PTHR10267">
    <property type="entry name" value="DNA POLYMERASE SUBUNIT GAMMA-1"/>
    <property type="match status" value="1"/>
</dbReference>
<dbReference type="PANTHER" id="PTHR10267:SF0">
    <property type="entry name" value="DNA POLYMERASE SUBUNIT GAMMA-1"/>
    <property type="match status" value="1"/>
</dbReference>
<dbReference type="Pfam" id="PF18136">
    <property type="entry name" value="DNApol_Exo"/>
    <property type="match status" value="1"/>
</dbReference>
<dbReference type="PIRSF" id="PIRSF000797">
    <property type="entry name" value="DNA_pol_mt"/>
    <property type="match status" value="1"/>
</dbReference>
<dbReference type="PRINTS" id="PR00867">
    <property type="entry name" value="DNAPOLG"/>
</dbReference>
<dbReference type="SMART" id="SM00482">
    <property type="entry name" value="POLAc"/>
    <property type="match status" value="1"/>
</dbReference>
<dbReference type="SUPFAM" id="SSF56672">
    <property type="entry name" value="DNA/RNA polymerases"/>
    <property type="match status" value="1"/>
</dbReference>
<dbReference type="SUPFAM" id="SSF53098">
    <property type="entry name" value="Ribonuclease H-like"/>
    <property type="match status" value="1"/>
</dbReference>
<dbReference type="PROSITE" id="PS00447">
    <property type="entry name" value="DNA_POLYMERASE_A"/>
    <property type="match status" value="1"/>
</dbReference>
<evidence type="ECO:0000256" key="1">
    <source>
        <dbReference type="SAM" id="MobiDB-lite"/>
    </source>
</evidence>
<evidence type="ECO:0000269" key="2">
    <source>
    </source>
</evidence>
<evidence type="ECO:0000269" key="3">
    <source>
    </source>
</evidence>
<evidence type="ECO:0000269" key="4">
    <source>
    </source>
</evidence>
<evidence type="ECO:0000269" key="5">
    <source>
    </source>
</evidence>
<evidence type="ECO:0000269" key="6">
    <source>
    </source>
</evidence>
<evidence type="ECO:0000269" key="7">
    <source>
    </source>
</evidence>
<evidence type="ECO:0000269" key="8">
    <source>
    </source>
</evidence>
<evidence type="ECO:0000269" key="9">
    <source>
    </source>
</evidence>
<evidence type="ECO:0000269" key="10">
    <source>
    </source>
</evidence>
<evidence type="ECO:0000269" key="11">
    <source>
    </source>
</evidence>
<evidence type="ECO:0000269" key="12">
    <source>
    </source>
</evidence>
<evidence type="ECO:0000269" key="13">
    <source>
    </source>
</evidence>
<evidence type="ECO:0000269" key="14">
    <source>
    </source>
</evidence>
<evidence type="ECO:0000269" key="15">
    <source>
    </source>
</evidence>
<evidence type="ECO:0000269" key="16">
    <source>
    </source>
</evidence>
<evidence type="ECO:0000269" key="17">
    <source>
    </source>
</evidence>
<evidence type="ECO:0000269" key="18">
    <source>
    </source>
</evidence>
<evidence type="ECO:0000269" key="19">
    <source>
    </source>
</evidence>
<evidence type="ECO:0000269" key="20">
    <source>
    </source>
</evidence>
<evidence type="ECO:0000269" key="21">
    <source>
    </source>
</evidence>
<evidence type="ECO:0000269" key="22">
    <source>
    </source>
</evidence>
<evidence type="ECO:0000269" key="23">
    <source>
    </source>
</evidence>
<evidence type="ECO:0000269" key="24">
    <source>
    </source>
</evidence>
<evidence type="ECO:0000269" key="25">
    <source>
    </source>
</evidence>
<evidence type="ECO:0000269" key="26">
    <source>
    </source>
</evidence>
<evidence type="ECO:0000269" key="27">
    <source>
    </source>
</evidence>
<evidence type="ECO:0000269" key="28">
    <source>
    </source>
</evidence>
<evidence type="ECO:0000269" key="29">
    <source>
    </source>
</evidence>
<evidence type="ECO:0000269" key="30">
    <source>
    </source>
</evidence>
<evidence type="ECO:0000269" key="31">
    <source>
    </source>
</evidence>
<evidence type="ECO:0000269" key="32">
    <source>
    </source>
</evidence>
<evidence type="ECO:0000269" key="33">
    <source>
    </source>
</evidence>
<evidence type="ECO:0000269" key="34">
    <source>
    </source>
</evidence>
<evidence type="ECO:0000269" key="35">
    <source>
    </source>
</evidence>
<evidence type="ECO:0000269" key="36">
    <source>
    </source>
</evidence>
<evidence type="ECO:0000269" key="37">
    <source>
    </source>
</evidence>
<evidence type="ECO:0000269" key="38">
    <source>
    </source>
</evidence>
<evidence type="ECO:0000269" key="39">
    <source>
    </source>
</evidence>
<evidence type="ECO:0000269" key="40">
    <source>
    </source>
</evidence>
<evidence type="ECO:0000269" key="41">
    <source>
    </source>
</evidence>
<evidence type="ECO:0000269" key="42">
    <source>
    </source>
</evidence>
<evidence type="ECO:0000269" key="43">
    <source>
    </source>
</evidence>
<evidence type="ECO:0000269" key="44">
    <source>
    </source>
</evidence>
<evidence type="ECO:0000269" key="45">
    <source>
    </source>
</evidence>
<evidence type="ECO:0000269" key="46">
    <source>
    </source>
</evidence>
<evidence type="ECO:0000269" key="47">
    <source>
    </source>
</evidence>
<evidence type="ECO:0000269" key="48">
    <source>
    </source>
</evidence>
<evidence type="ECO:0000269" key="49">
    <source>
    </source>
</evidence>
<evidence type="ECO:0000269" key="50">
    <source>
    </source>
</evidence>
<evidence type="ECO:0000269" key="51">
    <source ref="3"/>
</evidence>
<evidence type="ECO:0000269" key="52">
    <source ref="4"/>
</evidence>
<evidence type="ECO:0000303" key="53">
    <source>
    </source>
</evidence>
<evidence type="ECO:0000303" key="54">
    <source>
    </source>
</evidence>
<evidence type="ECO:0000303" key="55">
    <source>
    </source>
</evidence>
<evidence type="ECO:0000303" key="56">
    <source>
    </source>
</evidence>
<evidence type="ECO:0000305" key="57"/>
<evidence type="ECO:0000305" key="58">
    <source>
    </source>
</evidence>
<evidence type="ECO:0000305" key="59">
    <source>
    </source>
</evidence>
<evidence type="ECO:0000312" key="60">
    <source>
        <dbReference type="HGNC" id="HGNC:9179"/>
    </source>
</evidence>
<evidence type="ECO:0007744" key="61">
    <source>
        <dbReference type="PDB" id="4ZTZ"/>
    </source>
</evidence>
<evidence type="ECO:0007744" key="62">
    <source>
        <dbReference type="PDB" id="8D37"/>
    </source>
</evidence>
<evidence type="ECO:0007829" key="63">
    <source>
        <dbReference type="PDB" id="3IKM"/>
    </source>
</evidence>
<evidence type="ECO:0007829" key="64">
    <source>
        <dbReference type="PDB" id="4ZTU"/>
    </source>
</evidence>
<evidence type="ECO:0007829" key="65">
    <source>
        <dbReference type="PDB" id="5C51"/>
    </source>
</evidence>
<evidence type="ECO:0007829" key="66">
    <source>
        <dbReference type="PDB" id="8D33"/>
    </source>
</evidence>
<evidence type="ECO:0007829" key="67">
    <source>
        <dbReference type="PDB" id="8D37"/>
    </source>
</evidence>
<evidence type="ECO:0007829" key="68">
    <source>
        <dbReference type="PDB" id="8D3R"/>
    </source>
</evidence>
<evidence type="ECO:0007829" key="69">
    <source>
        <dbReference type="PDB" id="8D42"/>
    </source>
</evidence>
<evidence type="ECO:0007829" key="70">
    <source>
        <dbReference type="PDB" id="8UDL"/>
    </source>
</evidence>
<evidence type="ECO:0007829" key="71">
    <source>
        <dbReference type="PDB" id="8V5D"/>
    </source>
</evidence>
<evidence type="ECO:0007829" key="72">
    <source>
        <dbReference type="PDB" id="8V5R"/>
    </source>
</evidence>
<protein>
    <recommendedName>
        <fullName>DNA polymerase subunit gamma-1</fullName>
        <ecNumber evidence="2 18 39 49">2.7.7.7</ecNumber>
    </recommendedName>
    <alternativeName>
        <fullName>3'-5' exodeoxyribonuclease</fullName>
        <ecNumber evidence="2 5 7 45 49">3.1.11.-</ecNumber>
    </alternativeName>
    <alternativeName>
        <fullName>5'-deoxyribose-phosphate lyase</fullName>
        <ecNumber evidence="50">4.2.99.-</ecNumber>
    </alternativeName>
    <alternativeName>
        <fullName>Mitochondrial DNA polymerase catalytic subunit</fullName>
    </alternativeName>
    <alternativeName>
        <fullName>PolG-alpha</fullName>
    </alternativeName>
</protein>
<proteinExistence type="evidence at protein level"/>
<reference key="1">
    <citation type="journal article" date="1996" name="Genomics">
        <title>Cloning and characterization of the human mitochondrial DNA polymerase, DNA polymerase gamma.</title>
        <authorList>
            <person name="Ropp P.A."/>
            <person name="Copeland W.C."/>
        </authorList>
    </citation>
    <scope>NUCLEOTIDE SEQUENCE [MRNA]</scope>
    <scope>DOMAIN</scope>
</reference>
<reference key="2">
    <citation type="journal article" date="1997" name="Gene">
        <title>Mitochondrial DNA polymerases from yeast to man: a new family of polymerases.</title>
        <authorList>
            <person name="Lecrenier N.L."/>
            <person name="van der Bruggen P."/>
            <person name="Foury F."/>
        </authorList>
    </citation>
    <scope>NUCLEOTIDE SEQUENCE [MRNA]</scope>
</reference>
<reference key="3">
    <citation type="submission" date="1996-03" db="EMBL/GenBank/DDBJ databases">
        <authorList>
            <person name="Watanabe T.K."/>
            <person name="Shimizu F."/>
            <person name="Nishino N."/>
            <person name="Fujiwara T."/>
            <person name="Kanemoto N."/>
            <person name="Suzuki M."/>
            <person name="Nakamura Y."/>
            <person name="Hirai Y."/>
            <person name="Maekawa H."/>
            <person name="Takahashi E."/>
        </authorList>
    </citation>
    <scope>NUCLEOTIDE SEQUENCE [MRNA]</scope>
    <scope>VARIANT GLN-GLN-55 INS</scope>
    <source>
        <tissue>Brain</tissue>
    </source>
</reference>
<reference key="4">
    <citation type="submission" date="2002-04" db="EMBL/GenBank/DDBJ databases">
        <authorList>
            <consortium name="NIEHS SNPs program"/>
        </authorList>
    </citation>
    <scope>NUCLEOTIDE SEQUENCE [GENOMIC DNA]</scope>
    <scope>VARIANTS GLN-55 INS; GLN-193; CYS-546; LYS-662; TRP-1142; GLY-1143; CYS-1146 AND HIS-1236</scope>
</reference>
<reference key="5">
    <citation type="journal article" date="2004" name="Genome Res.">
        <title>The status, quality, and expansion of the NIH full-length cDNA project: the Mammalian Gene Collection (MGC).</title>
        <authorList>
            <consortium name="The MGC Project Team"/>
        </authorList>
    </citation>
    <scope>NUCLEOTIDE SEQUENCE [LARGE SCALE MRNA]</scope>
    <source>
        <tissue>Lymph</tissue>
        <tissue>Testis</tissue>
    </source>
</reference>
<reference key="6">
    <citation type="journal article" date="1998" name="Biochemistry">
        <title>Expression, purification, and initial kinetic characterization of the large subunit of the human mitochondrial DNA polymerase.</title>
        <authorList>
            <person name="Graves S.W."/>
            <person name="Johnson A.A."/>
            <person name="Johnson K.A."/>
        </authorList>
    </citation>
    <scope>FUNCTION</scope>
    <scope>CATALYTIC ACTIVITY</scope>
</reference>
<reference key="7">
    <citation type="journal article" date="1998" name="Proc. Natl. Acad. Sci. U.S.A.">
        <title>Identification of 5'-deoxyribose phosphate lyase activity in human DNA polymerase gamma and its role in mitochondrial base excision repair in vitro.</title>
        <authorList>
            <person name="Longley M.J."/>
            <person name="Prasad R."/>
            <person name="Srivastava D.K."/>
            <person name="Wilson S.H."/>
            <person name="Copeland W.C."/>
        </authorList>
    </citation>
    <scope>FUNCTION</scope>
    <scope>CATALYTIC ACTIVITY</scope>
</reference>
<reference key="8">
    <citation type="journal article" date="2000" name="J. Biol. Chem.">
        <title>In vivo functional analysis of the human mitochondrial DNA polymerase POLG expressed in cultured human cells.</title>
        <authorList>
            <person name="Spelbrink J.N."/>
            <person name="Toivonen J.M."/>
            <person name="Hakkaart G.A."/>
            <person name="Kurkela J.M."/>
            <person name="Cooper H.M."/>
            <person name="Lehtinen S.K."/>
            <person name="Lecrenier N."/>
            <person name="Back J.W."/>
            <person name="Speijer D."/>
            <person name="Foury F."/>
            <person name="Jacobs H.T."/>
        </authorList>
    </citation>
    <scope>FUNCTION</scope>
    <scope>CATALYTIC ACTIVITY</scope>
    <scope>SUBCELLULAR LOCATION</scope>
    <scope>MUTAGENESIS OF ASP-198; ASP-890 AND ASP-1135</scope>
</reference>
<reference key="9">
    <citation type="journal article" date="2001" name="J. Biol. Chem.">
        <title>Fidelity of nucleotide incorporation by human mitochondrial DNA polymerase.</title>
        <authorList>
            <person name="Johnson A.A."/>
            <person name="Johnson K.A."/>
        </authorList>
    </citation>
    <scope>FUNCTION</scope>
    <scope>CATALYTIC ACTIVITY</scope>
    <scope>SUBUNIT</scope>
    <scope>MUTAGENESIS OF GLU-200</scope>
</reference>
<reference key="10">
    <citation type="journal article" date="2001" name="J. Biol. Chem.">
        <title>Exonuclease proofreading by human mitochondrial DNA polymerase.</title>
        <authorList>
            <person name="Johnson A.A."/>
            <person name="Johnson K.A."/>
        </authorList>
    </citation>
    <scope>FUNCTION</scope>
    <scope>CATALYTIC ACTIVITY</scope>
    <scope>SUBUNIT</scope>
</reference>
<reference key="11">
    <citation type="journal article" date="2001" name="J. Biol. Chem.">
        <title>The fidelity of human DNA polymerase gamma with and without exonucleolytic proofreading and the p55 accessory subunit.</title>
        <authorList>
            <person name="Longley M.J."/>
            <person name="Nguyen D."/>
            <person name="Kunkel T.A."/>
            <person name="Copeland W.C."/>
        </authorList>
    </citation>
    <scope>FUNCTION</scope>
    <scope>CATALYTIC ACTIVITY</scope>
    <scope>BIOPHYSICOCHEMICAL PROPERTIES</scope>
    <scope>SUBUNIT</scope>
</reference>
<reference key="12">
    <citation type="journal article" date="2004" name="Annu. Rev. Biochem.">
        <title>DNA polymerase gamma, the mitochondrial replicase.</title>
        <authorList>
            <person name="Kaguni L.S."/>
        </authorList>
    </citation>
    <scope>REVIEW</scope>
    <scope>DOMAIN</scope>
</reference>
<reference key="13">
    <citation type="journal article" date="2004" name="EMBO J.">
        <title>Reconstitution of a minimal mtDNA replisome in vitro.</title>
        <authorList>
            <person name="Korhonen J.A."/>
            <person name="Pham X.H."/>
            <person name="Pellegrini M."/>
            <person name="Falkenberg M."/>
        </authorList>
    </citation>
    <scope>FUNCTION</scope>
    <scope>CATALYTIC ACTIVITY</scope>
    <scope>SUBUNIT</scope>
</reference>
<reference key="14">
    <citation type="journal article" date="2008" name="J. Biol. Chem.">
        <title>The layered structure of human mitochondrial DNA nucleoids.</title>
        <authorList>
            <person name="Bogenhagen D.F."/>
            <person name="Rousseau D."/>
            <person name="Burke S."/>
        </authorList>
    </citation>
    <scope>SUBCELLULAR LOCATION</scope>
    <scope>ASSOCIATION WITH MITOCHONDRIAL DNA</scope>
    <scope>IDENTIFICATION BY MASS SPECTROMETRY</scope>
</reference>
<reference key="15">
    <citation type="journal article" date="2015" name="Nat. Commun.">
        <title>The exonuclease activity of DNA polymerase gamma is required for ligation during mitochondrial DNA replication.</title>
        <authorList>
            <person name="Macao B."/>
            <person name="Uhler J.P."/>
            <person name="Siibak T."/>
            <person name="Zhu X."/>
            <person name="Shi Y."/>
            <person name="Sheng W."/>
            <person name="Olsson M."/>
            <person name="Stewart J.B."/>
            <person name="Gustafsson C.M."/>
            <person name="Falkenberg M."/>
        </authorList>
    </citation>
    <scope>FUNCTION</scope>
    <scope>CATALYTIC ACTIVITY</scope>
    <scope>MUTAGENESIS OF ASP-274</scope>
    <scope>CHARACTERIZATION OF VARIANT LS HIS-232</scope>
    <scope>CHARACTERIZATION OF VARIANTS PEOB1 ALA-268 AND ARG-304</scope>
    <scope>CHARACTERIZATION OF VARIANTS GLN-275; LEU-277; ARG-303 AND ARG-305</scope>
</reference>
<reference key="16">
    <citation type="journal article" date="2015" name="Proteomics">
        <title>N-terminome analysis of the human mitochondrial proteome.</title>
        <authorList>
            <person name="Vaca Jacome A.S."/>
            <person name="Rabilloud T."/>
            <person name="Schaeffer-Reiss C."/>
            <person name="Rompais M."/>
            <person name="Ayoub D."/>
            <person name="Lane L."/>
            <person name="Bairoch A."/>
            <person name="Van Dorsselaer A."/>
            <person name="Carapito C."/>
        </authorList>
    </citation>
    <scope>IDENTIFICATION BY MASS SPECTROMETRY [LARGE SCALE ANALYSIS]</scope>
</reference>
<reference key="17">
    <citation type="journal article" date="2017" name="Oncotarget">
        <title>Tetratricopeptide repeat domain 3 overexpression tends to form aggregates and inhibit ubiquitination and degradation of DNA polymerase gamma.</title>
        <authorList>
            <person name="Gong Y."/>
            <person name="Wang X."/>
            <person name="Shang X."/>
            <person name="Xiao S.P."/>
            <person name="Li W."/>
            <person name="Shang Y."/>
            <person name="Dou F."/>
        </authorList>
    </citation>
    <scope>INTERACTION WITH TTC3</scope>
</reference>
<reference key="18">
    <citation type="journal article" date="2021" name="Brain">
        <title>Biallelic variants in LIG3 cause a novel mitochondrial neurogastrointestinal encephalomyopathy.</title>
        <authorList>
            <person name="Bonora E."/>
            <person name="Chakrabarty S."/>
            <person name="Kellaris G."/>
            <person name="Tsutsumi M."/>
            <person name="Bianco F."/>
            <person name="Bergamini C."/>
            <person name="Ullah F."/>
            <person name="Isidori F."/>
            <person name="Liparulo I."/>
            <person name="Diquigiovanni C."/>
            <person name="Masin L."/>
            <person name="Rizzardi N."/>
            <person name="Cratere M.G."/>
            <person name="Boschetti E."/>
            <person name="Papa V."/>
            <person name="Maresca A."/>
            <person name="Cenacchi G."/>
            <person name="Casadio R."/>
            <person name="Martelli P."/>
            <person name="Matera I."/>
            <person name="Ceccherini I."/>
            <person name="Fato R."/>
            <person name="Raiola G."/>
            <person name="Arrigo S."/>
            <person name="Signa S."/>
            <person name="Sementa A.R."/>
            <person name="Severino M."/>
            <person name="Striano P."/>
            <person name="Fiorillo C."/>
            <person name="Goto T."/>
            <person name="Uchino S."/>
            <person name="Oyazato Y."/>
            <person name="Nakamura H."/>
            <person name="Mishra S.K."/>
            <person name="Yeh Y.S."/>
            <person name="Kato T."/>
            <person name="Nozu K."/>
            <person name="Tanboon J."/>
            <person name="Morioka I."/>
            <person name="Nishino I."/>
            <person name="Toda T."/>
            <person name="Goto Y.I."/>
            <person name="Ohtake A."/>
            <person name="Kosaki K."/>
            <person name="Yamaguchi Y."/>
            <person name="Nonaka I."/>
            <person name="Iijima K."/>
            <person name="Mimaki M."/>
            <person name="Kurahashi H."/>
            <person name="Raams A."/>
            <person name="MacInnes A."/>
            <person name="Alders M."/>
            <person name="Engelen M."/>
            <person name="Linthorst G."/>
            <person name="de Koning T."/>
            <person name="den Dunnen W."/>
            <person name="Dijkstra G."/>
            <person name="van Spaendonck K."/>
            <person name="van Gent D.C."/>
            <person name="Aronica E.M."/>
            <person name="Picco P."/>
            <person name="Carelli V."/>
            <person name="Seri M."/>
            <person name="Katsanis N."/>
            <person name="Duijkers F.A.M."/>
            <person name="Taniguchi-Ikeda M."/>
            <person name="De Giorgio R."/>
        </authorList>
    </citation>
    <scope>INTERACTION WITH LIG3</scope>
</reference>
<reference key="19">
    <citation type="journal article" date="2009" name="Cell">
        <title>Structural insight into processive human mitochondrial DNA synthesis and disease-related polymerase mutations.</title>
        <authorList>
            <person name="Lee Y.S."/>
            <person name="Kennedy W.D."/>
            <person name="Yin Y.W."/>
        </authorList>
    </citation>
    <scope>X-RAY CRYSTALLOGRAPHY (3.24 ANGSTROMS) OF 70-1239</scope>
    <scope>FUNCTION</scope>
    <scope>CATALYTIC ACTIVITY</scope>
    <scope>SUBUNIT</scope>
    <scope>MUTAGENESIS OF 543-VAL--LEU-558; LEU-549; LEU-552 AND LYS-553</scope>
</reference>
<reference key="20">
    <citation type="journal article" date="2015" name="EMBO J.">
        <title>Structural basis for processivity and antiviral drug toxicity in human mitochondrial DNA replicase.</title>
        <authorList>
            <person name="Szymanski M.R."/>
            <person name="Kuznetsov V.B."/>
            <person name="Shumate C."/>
            <person name="Meng Q."/>
            <person name="Lee Y.S."/>
            <person name="Patel G."/>
            <person name="Patel S."/>
            <person name="Yin Y.W."/>
        </authorList>
    </citation>
    <scope>X-RAY CRYSTALLOGRAPHY (3.30 ANGSTROMS) OF 30-1239 IN COMPLEX WITH MG(2+); PRIMER-TEMPLATE; 2',3'-DIDEOXYCYTIDINE 5'-TRIPHOSPHATE AND INHIBITOR ZALCITABINE</scope>
    <scope>COFACTOR</scope>
    <scope>FUNCTION</scope>
    <scope>CATALYTIC ACTIVITY</scope>
    <scope>ACTIVITY REGULATION</scope>
    <scope>SUBUNIT</scope>
    <scope>MUTAGENESIS OF LYS-498; LYS-499 AND LYS-501</scope>
    <scope>DOMAIN</scope>
</reference>
<reference key="21">
    <citation type="journal article" date="2023" name="Nat. Struct. Mol. Biol.">
        <title>Polgamma coordinates DNA synthesis and proofreading to ensure mitochondrial genome integrity.</title>
        <authorList>
            <person name="Park J."/>
            <person name="Herrmann G.K."/>
            <person name="Mitchell P.G."/>
            <person name="Sherman M.B."/>
            <person name="Yin Y.W."/>
        </authorList>
    </citation>
    <scope>STRUCTURE BY ELECTRON MICROSCOPY (2.46 ANGSTROMS) IN COMPLEX WITH 2'-DEOXYCYTIDINE-5'-TRIPHOSPHATE</scope>
    <scope>FUNCTION</scope>
    <scope>CATALYTIC ACTIVITY</scope>
    <scope>SUBUNIT</scope>
    <scope>ACTIVE SITE</scope>
    <scope>SITE</scope>
    <scope>MUTAGENESIS OF ASP-198; GLU-200 AND ARG-853</scope>
</reference>
<reference key="22">
    <citation type="journal article" date="2001" name="Nat. Genet.">
        <title>Mutation of POLG is associated with progressive external ophthalmoplegia characterized by mtDNA deletions.</title>
        <authorList>
            <person name="Van Goethem G."/>
            <person name="Dermaut B."/>
            <person name="Loefgren A."/>
            <person name="Martin J.-J."/>
            <person name="Van Broeckhoven C."/>
        </authorList>
    </citation>
    <scope>VARIANTS PEOB1 PRO-3; ARG-304; THR-467 AND CYS-955</scope>
</reference>
<reference key="23">
    <citation type="journal article" date="2002" name="Ann. Neurol.">
        <title>Mutations of mitochondrial DNA polymerase gammaA are a frequent cause of autosomal dominant or recessive progressive external ophthalmoplegia.</title>
        <authorList>
            <person name="Lamantea E."/>
            <person name="Tiranti V."/>
            <person name="Bordoni A."/>
            <person name="Toscano A."/>
            <person name="Bono F."/>
            <person name="Servidei S."/>
            <person name="Papadimitriou A."/>
            <person name="Spelbrink H."/>
            <person name="Silvestri L."/>
            <person name="Casari G."/>
            <person name="Comi G.P."/>
            <person name="Zeviani M."/>
        </authorList>
    </citation>
    <scope>VARIANTS PEOA1 ASP-923; HIS-943; CYS-955; SER-957 AND LEU-1176</scope>
    <scope>VARIANTS PEOB1 ILE-251; LEU-309 AND SER-848</scope>
</reference>
<reference key="24">
    <citation type="journal article" date="2002" name="J. Biol. Chem.">
        <title>Active site mutation in DNA polymerase gamma associated with progressive external ophthalmoplegia causes error-prone DNA synthesis.</title>
        <authorList>
            <person name="Ponamarev M.V."/>
            <person name="Longley M.J."/>
            <person name="Nguyen D."/>
            <person name="Kunkel T.A."/>
            <person name="Copeland W.C."/>
        </authorList>
    </citation>
    <scope>CHARACTERIZATION OF VARIANT PEOA1 CYS-955</scope>
    <scope>FUNCTION</scope>
    <scope>CATALYTIC ACTIVITY</scope>
</reference>
<reference key="25">
    <citation type="journal article" date="2003" name="Arch. Neurol.">
        <title>Clinical and genetic heterogeneity in progressive external ophthalmoplegia due to mutations in polymerase gamma.</title>
        <authorList>
            <person name="Filosto M."/>
            <person name="Mancuso M."/>
            <person name="Nishigaki Y."/>
            <person name="Pancrudo J."/>
            <person name="Harati Y."/>
            <person name="Gooch C."/>
            <person name="Mankodi A."/>
            <person name="Bayne L."/>
            <person name="Bonilla E."/>
            <person name="Shanske S."/>
            <person name="Hirano M."/>
            <person name="DiMauro S."/>
        </authorList>
    </citation>
    <scope>VARIANTS PEOB1 TRP-579; LEU-587; THR-889 AND VAL-1076</scope>
    <scope>VARIANT HIS-1236</scope>
</reference>
<reference key="26">
    <citation type="journal article" date="2003" name="Eur. J. Hum. Genet.">
        <title>Novel POLG mutations in progressive external ophthalmoplegia mimicking mitochondrial neurogastrointestinal encephalomyopathy.</title>
        <authorList>
            <person name="Van Goethem G."/>
            <person name="Schwartz M."/>
            <person name="Loefgren A."/>
            <person name="Dermaut B."/>
            <person name="Van Broeckhoven C."/>
            <person name="Vissing J."/>
        </authorList>
    </citation>
    <scope>VARIANTS MTDPS4B ILE-251; LEU-587 AND SER-864</scope>
</reference>
<reference key="27">
    <citation type="journal article" date="2003" name="Hum. Mutat.">
        <title>Digenic progressive external ophthalmoplegia in a sporadic patient: recessive mutations in POLG and C10orf2/Twinkle.</title>
        <authorList>
            <person name="Van Goethem G."/>
            <person name="Loefgren A."/>
            <person name="Dermaut B."/>
            <person name="Ceuterick C."/>
            <person name="Martin J.-J."/>
            <person name="Van Broeckhoven C."/>
        </authorList>
    </citation>
    <scope>VARIANT PEOB1 SER-848</scope>
</reference>
<reference key="28">
    <citation type="journal article" date="2003" name="Hum. Mutat.">
        <title>POLG mutations in sporadic mitochondrial disorders with multiple mtDNA deletions.</title>
        <authorList>
            <person name="Di Fonzo A."/>
            <person name="Bordoni A."/>
            <person name="Crimi M."/>
            <person name="Sara G."/>
            <person name="Del Bo R."/>
            <person name="Bresolin N."/>
            <person name="Comi G.P."/>
        </authorList>
    </citation>
    <scope>VARIANTS PEOB1 ILE-251; ALA-268; ARG-312; THR-467; GLN-562; LEU-587; PRO-807 AND TYR-932</scope>
    <scope>VARIANTS GLY-1143 AND HIS-1236</scope>
</reference>
<reference key="29">
    <citation type="journal article" date="2003" name="Neurology">
        <title>Mutations of ANT1, Twinkle, and POLG1 in sporadic progressive external ophthalmoplegia (PEO).</title>
        <authorList>
            <person name="Agostino A."/>
            <person name="Valletta L."/>
            <person name="Chinnery P.F."/>
            <person name="Ferrari G."/>
            <person name="Carrara F."/>
            <person name="Taylor R.W."/>
            <person name="Schaefer A.M."/>
            <person name="Turnbull D.M."/>
            <person name="Tiranti V."/>
            <person name="Zeviani M."/>
        </authorList>
    </citation>
    <scope>VARIANTS PEOB1 TRP-227; ILE-251; ARG-312; VAL-431; THR-467; GLN-1047; CYS-1096 AND CYS-1104</scope>
</reference>
<reference key="30">
    <citation type="journal article" date="2003" name="Neurology">
        <title>Patient homozygous for a recessive POLG mutation presents with features of MERRF.</title>
        <authorList>
            <person name="Van Goethem G."/>
            <person name="Mercelis R."/>
            <person name="Loefgren A."/>
            <person name="Seneca S."/>
            <person name="Ceuterick C."/>
            <person name="Martin J.-J."/>
            <person name="Van Broeckhoven C."/>
        </authorList>
    </citation>
    <scope>VARIANT SCAE THR-467</scope>
</reference>
<reference key="31">
    <citation type="journal article" date="2003" name="Neuromuscul. Disord.">
        <title>Recessive POLG mutations presenting with sensory and ataxic neuropathy in compound heterozygote patients with progressive external ophthalmoplegia.</title>
        <authorList>
            <person name="Van Goethem G."/>
            <person name="Martin J.-J."/>
            <person name="Dermaut B."/>
            <person name="Loefgren A."/>
            <person name="Wibail A."/>
            <person name="Ververken D."/>
            <person name="Tack P."/>
            <person name="Dehaene I."/>
            <person name="Van Zandijcke M."/>
            <person name="Moonen M."/>
            <person name="Ceuterick C."/>
            <person name="De Jonghe P."/>
            <person name="Van Broeckhoven C."/>
        </authorList>
    </citation>
    <scope>VARIANTS SANDO PRO-3; ARG-304; THR-467; TRP-627 AND CYS-955</scope>
</reference>
<reference key="32">
    <citation type="journal article" date="2004" name="Ann. Neurol.">
        <title>POLG mutations associated with Alpers' syndrome and mitochondrial DNA depletion.</title>
        <authorList>
            <person name="Naviaux R.K."/>
            <person name="Nguyen K.V."/>
        </authorList>
    </citation>
    <scope>VARIANT MTDPS4A THR-467</scope>
</reference>
<reference key="33">
    <citation type="journal article" date="2004" name="Ann. Neurol.">
        <title>Sequence analysis of familial PEO shows additional mutations associated with the 752C--&gt;T and 3527C--&gt;T changes in the POLG1 gene.</title>
        <authorList>
            <person name="Lamantea E."/>
            <person name="Zeviani M."/>
        </authorList>
    </citation>
    <scope>VARIANTS PEOB1 TRP-227; ILE-251; LEU-309; LEU-587; SER-848; ILE-1106 AND LEU-1176</scope>
</reference>
<reference key="34">
    <citation type="journal article" date="2004" name="Arch. Neurol.">
        <title>A novel polymerase gamma mutation in a family with ophthalmoplegia, neuropathy, and parkinsonism.</title>
        <authorList>
            <person name="Mancuso M."/>
            <person name="Filosto M."/>
            <person name="Oh S.J."/>
            <person name="DiMauro S."/>
        </authorList>
    </citation>
    <scope>VARIANT PEOA1 CYS-831</scope>
</reference>
<reference key="35">
    <citation type="journal article" date="2004" name="Lancet">
        <title>Parkinsonism, premature menopause, and mitochondrial DNA polymerase gamma mutations: clinical and molecular genetic study.</title>
        <authorList>
            <person name="Luoma P."/>
            <person name="Melberg A."/>
            <person name="Rinne J.O."/>
            <person name="Kaukonen J.A."/>
            <person name="Nupponen N.N."/>
            <person name="Chalmers R.M."/>
            <person name="Oldfors A."/>
            <person name="Rautakorpi I."/>
            <person name="Peltonen L."/>
            <person name="Majamaa K."/>
            <person name="Somer H."/>
            <person name="Suomalainen A."/>
        </authorList>
    </citation>
    <scope>VARIANTS PEOA1 CYS-953 AND CYS-955</scope>
    <scope>VARIANTS PEOB1 ASP-468 AND THR-1105</scope>
</reference>
<reference key="36">
    <citation type="journal article" date="2004" name="Neurology">
        <title>POLG mutations causing ophthalmoplegia, sensorimotor polyneuropathy, ataxia, and deafness.</title>
        <authorList>
            <person name="Mancuso M."/>
            <person name="Filosto M."/>
            <person name="Bellan M."/>
            <person name="Liguori R."/>
            <person name="Montagna P."/>
            <person name="Baruzzi A."/>
            <person name="DiMauro S."/>
            <person name="Carelli V."/>
        </authorList>
    </citation>
    <scope>VARIANTS SANDO TYR-932 AND ARG-1051</scope>
</reference>
<reference key="37">
    <citation type="journal article" date="2004" name="Neurology">
        <title>POLG mutations in neurodegenerative disorders with ataxia but no muscle involvement.</title>
        <authorList>
            <person name="Van Goethem G."/>
            <person name="Luoma P."/>
            <person name="Rantamaeki M."/>
            <person name="Al-Memar A."/>
            <person name="Kaakkola S."/>
            <person name="Hackman P."/>
            <person name="Krahe R."/>
            <person name="Loefgren A."/>
            <person name="Martin J.-J."/>
            <person name="De Jonghe P."/>
            <person name="Suomalainen A."/>
            <person name="Udd B."/>
            <person name="Van Broeckhoven C."/>
        </authorList>
    </citation>
    <scope>VARIANT PEOB1 THR-467</scope>
    <scope>VARIANT SANDO SER-748</scope>
    <scope>VARIANT GLY-1143</scope>
</reference>
<reference key="38">
    <citation type="journal article" date="2005" name="Am. J. Hum. Genet.">
        <title>Mitochondrial DNA polymerase W748S mutation: a common cause of autosomal recessive ataxia with ancient European origin.</title>
        <authorList>
            <person name="Hakonen A.H."/>
            <person name="Heiskanen S."/>
            <person name="Juvonen V."/>
            <person name="Lappalainen I."/>
            <person name="Luoma P.T."/>
            <person name="Rantamaeki M."/>
            <person name="Van Goethem G."/>
            <person name="Loefgren A."/>
            <person name="Hackman P."/>
            <person name="Paetau A."/>
            <person name="Kaakkola S."/>
            <person name="Majamaa K."/>
            <person name="Varilo T."/>
            <person name="Udd B."/>
            <person name="Kaeaeriaeinen H."/>
            <person name="Bindoff L.A."/>
            <person name="Suomalainen A."/>
        </authorList>
    </citation>
    <scope>VARIANT SANDO SER-748</scope>
    <scope>VARIANT GLY-1143</scope>
</reference>
<reference key="39">
    <citation type="journal article" date="2005" name="Ann. Neurol.">
        <title>POLG mutations and Alpers syndrome.</title>
        <authorList>
            <person name="Davidzon G."/>
            <person name="Mancuso M."/>
            <person name="Ferraris S."/>
            <person name="Quinzii C."/>
            <person name="Hirano M."/>
            <person name="Peters H.L."/>
            <person name="Kirby D."/>
            <person name="Thorburn D.R."/>
            <person name="DiMauro S."/>
        </authorList>
    </citation>
    <scope>VARIANTS MTDPS4A SER-748 AND SER-848</scope>
</reference>
<reference key="40">
    <citation type="journal article" date="2005" name="Brain">
        <title>Infantile hepatocerebral syndromes associated with mutations in the mitochondrial DNA polymerase-gammaA.</title>
        <authorList>
            <person name="Ferrari G."/>
            <person name="Lamantea E."/>
            <person name="Donati A."/>
            <person name="Filosto M."/>
            <person name="Briem E."/>
            <person name="Carrara F."/>
            <person name="Parini R."/>
            <person name="Simonati A."/>
            <person name="Santer R."/>
            <person name="Zeviani M."/>
        </authorList>
    </citation>
    <scope>VARIANTS MTDPS4A GLY-232; PRO-244; ILE-251; THR-467; LEU-587; SER-748; SER-848 AND PRO-957</scope>
    <scope>VARIANT GLY-1143</scope>
</reference>
<reference key="41">
    <citation type="journal article" date="2005" name="Hum. Mol. Genet.">
        <title>Functional defects due to spacer-region mutations of human mitochondrial DNA polymerase in a family with an ataxia-myopathy syndrome.</title>
        <authorList>
            <person name="Luoma P.T."/>
            <person name="Luo N."/>
            <person name="Loescher W.N."/>
            <person name="Farr C.L."/>
            <person name="Horvath R."/>
            <person name="Wanschitz J."/>
            <person name="Kiechl S."/>
            <person name="Kaguni L.S."/>
            <person name="Suomalainen A."/>
        </authorList>
    </citation>
    <scope>VARIANT PEOB1 THR-467</scope>
    <scope>VARIANT SANDO GLN-627</scope>
    <scope>VARIANT HIS-1236</scope>
    <scope>CHARACTERIZATION OF VARIANT PEOB1 THR-467</scope>
    <scope>CHARACTERIZATION OF VARIANT SANDO GLN-627</scope>
    <scope>FUNCTION</scope>
    <scope>CATALYTIC ACTIVITY</scope>
</reference>
<reference key="42">
    <citation type="journal article" date="2005" name="Neurology">
        <title>Autosomal recessive mitochondrial ataxic syndrome due to mitochondrial polymerase gamma mutations.</title>
        <authorList>
            <person name="Winterthun S."/>
            <person name="Ferrari G."/>
            <person name="He L."/>
            <person name="Taylor R.W."/>
            <person name="Zeviani M."/>
            <person name="Turnbull D.M."/>
            <person name="Engelsen B.A."/>
            <person name="Moen G."/>
            <person name="Bindoff L.A."/>
        </authorList>
    </citation>
    <scope>VARIANTS SANDO THR-467; HIS-497 AND SER-748</scope>
</reference>
<reference key="43">
    <citation type="journal article" date="2006" name="Ann. Neurol.">
        <title>Early-onset familial parkinsonism due to POLG mutations.</title>
        <authorList>
            <person name="Davidzon G."/>
            <person name="Greene P."/>
            <person name="Mancuso M."/>
            <person name="Klos K.J."/>
            <person name="Ahlskog J.E."/>
            <person name="Hirano M."/>
            <person name="DiMauro S."/>
        </authorList>
    </citation>
    <scope>VARIANTS PEOB1 ARG-737 AND TRP-853</scope>
</reference>
<reference key="44">
    <citation type="journal article" date="2006" name="Arch. Neurol.">
        <title>Association of novel POLG mutations and multiple mitochondrial DNA deletions with variable clinical phenotypes in a Spanish population.</title>
        <authorList>
            <person name="Gonzalez-Vioque E."/>
            <person name="Blazquez A."/>
            <person name="Fernandez-Moreira D."/>
            <person name="Bornstein B."/>
            <person name="Bautista J."/>
            <person name="Arpa J."/>
            <person name="Navarro C."/>
            <person name="Campos Y."/>
            <person name="Fernandez-Moreno M.A."/>
            <person name="Garesse R."/>
            <person name="Arenas J."/>
            <person name="Martin M.A."/>
        </authorList>
    </citation>
    <scope>VARIANTS PEOB1 LEU-603; TRP-853; CYS-1146 AND ASN-1184</scope>
</reference>
<reference key="45">
    <citation type="journal article" date="2006" name="Brain">
        <title>Phenotypic spectrum associated with mutations of the mitochondrial polymerase gamma gene.</title>
        <authorList>
            <person name="Horvath R."/>
            <person name="Hudson G."/>
            <person name="Ferrari G."/>
            <person name="Fuetterer N."/>
            <person name="Ahola S."/>
            <person name="Lamantea E."/>
            <person name="Prokisch H."/>
            <person name="Lochmueller H."/>
            <person name="McFarland R."/>
            <person name="Ramesh V."/>
            <person name="Klopstock T."/>
            <person name="Freisinger P."/>
            <person name="Salvi F."/>
            <person name="Mayr J.A."/>
            <person name="Santer R."/>
            <person name="Tesarova M."/>
            <person name="Zeman J."/>
            <person name="Udd B."/>
            <person name="Taylor R.W."/>
            <person name="Turnbull D."/>
            <person name="Hanna M."/>
            <person name="Fialho D."/>
            <person name="Suomalainen A."/>
            <person name="Zeviani M."/>
            <person name="Chinnery P.F."/>
        </authorList>
    </citation>
    <scope>VARIANTS PEOB1 HIS-308; TRP-574 AND ARG-648</scope>
    <scope>VARIANT SANDO VAL-517</scope>
    <scope>VARIANTS MTDPS4A ASP-767; HIS-879; SER-885; PRO-914; HIS-1096 AND ASN-1191</scope>
</reference>
<reference key="46">
    <citation type="journal article" date="2006" name="Eur. J. Hum. Genet.">
        <title>Molecular analysis of ANT1, TWINKLE and POLG in patients with multiple deletions or depletion of mitochondrial DNA by a dHPLC-based assay.</title>
        <authorList>
            <person name="Naiemi M."/>
            <person name="Bannwarth S."/>
            <person name="Procaccio V."/>
            <person name="Pouget J."/>
            <person name="Desnuelle C."/>
            <person name="Pellissier J.-F."/>
            <person name="Roetig A."/>
            <person name="Munnich A."/>
            <person name="Calvas P."/>
            <person name="Richelme C."/>
            <person name="Jonveaux P."/>
            <person name="Castelnovo G."/>
            <person name="Simon M."/>
            <person name="Clanet M."/>
            <person name="Wallace D."/>
            <person name="Paquis-Flucklinger V."/>
        </authorList>
    </citation>
    <scope>VARIANTS PEOB1 ARG-304; ASP-380 AND THR-467</scope>
    <scope>VARIANT SANDO SER-748</scope>
    <scope>VARIANT MTDPS4A PRO-914</scope>
    <scope>VARIANTS GLY-1143 AND HIS-1236</scope>
</reference>
<reference key="47">
    <citation type="journal article" date="2006" name="Eur. J. Hum. Genet.">
        <authorList>
            <person name="Naiemi M."/>
            <person name="Bannwarth S."/>
            <person name="Procaccio V."/>
            <person name="Pouget J."/>
            <person name="Desnuelle C."/>
            <person name="Pellissier J.-F."/>
            <person name="Roetig A."/>
            <person name="Munnich A."/>
            <person name="Calvas P."/>
            <person name="Richelme C."/>
            <person name="Jonveaux P."/>
            <person name="Castelnovo G."/>
            <person name="Simon M."/>
            <person name="Clanet M."/>
            <person name="Wallace D."/>
            <person name="Paquis-Flucklinger V."/>
        </authorList>
    </citation>
    <scope>ERRATUM OF PUBMED:16639411</scope>
</reference>
<reference key="48">
    <citation type="journal article" date="2006" name="Neuromuscul. Disord.">
        <title>SANDO: two novel mutations in POLG1 gene.</title>
        <authorList>
            <person name="Gago M.F."/>
            <person name="Rosas M.J."/>
            <person name="Guimaraes J."/>
            <person name="Ferreira M."/>
            <person name="Vilarinho L."/>
            <person name="Castro L."/>
            <person name="Carpenter S."/>
        </authorList>
    </citation>
    <scope>VARIANTS SANDO ARG-648 AND CYS-807</scope>
</reference>
<reference key="49">
    <citation type="journal article" date="2007" name="Arch. Neurol.">
        <title>Mutation of the linker region of the polymerase gamma-1 (POLG1) gene associated with progressive external ophthalmoplegia and Parkinsonism.</title>
        <authorList>
            <person name="Hudson G."/>
            <person name="Schaefer A.M."/>
            <person name="Taylor R.W."/>
            <person name="Tiangyou W."/>
            <person name="Gibson A."/>
            <person name="Venables G."/>
            <person name="Griffiths P."/>
            <person name="Burn D.J."/>
            <person name="Turnbull D.M."/>
            <person name="Chinnery P.F."/>
        </authorList>
    </citation>
    <scope>VARIANT PEOA1 ASN-511</scope>
    <scope>VARIANT PHE-463</scope>
</reference>
<reference key="50">
    <citation type="journal article" date="2007" name="Neurology">
        <title>Mitochondrial DNA polymerase gamma variants in idiopathic sporadic Parkinson disease.</title>
        <authorList>
            <person name="Luoma P.T."/>
            <person name="Eerola J."/>
            <person name="Ahola S."/>
            <person name="Hakonen A.H."/>
            <person name="Hellstroem O."/>
            <person name="Kivistoe K.T."/>
            <person name="Tienari P.J."/>
            <person name="Suomalainen A."/>
        </authorList>
    </citation>
    <scope>VARIANT PEOA1 CYS-831</scope>
</reference>
<reference key="51">
    <citation type="journal article" date="2008" name="J. Neurol.">
        <title>Novel Twinkle (PEO1) gene mutations in Mendelian progressive external ophthalmoplegia.</title>
        <authorList>
            <person name="Virgilio R."/>
            <person name="Ronchi D."/>
            <person name="Hadjigeorgiou G.M."/>
            <person name="Bordoni A."/>
            <person name="Saladino F."/>
            <person name="Moggio M."/>
            <person name="Adobbati L."/>
            <person name="Kafetsouli D."/>
            <person name="Tsironi E."/>
            <person name="Previtali S."/>
            <person name="Papadimitriou A."/>
            <person name="Bresolin N."/>
            <person name="Comi G.P."/>
        </authorList>
    </citation>
    <scope>VARIANT PEOA1 HIS-1186</scope>
</reference>
<reference key="52">
    <citation type="journal article" date="2009" name="Hum. Mutat.">
        <title>Analysis of mutant DNA polymerase gamma in patients with mitochondrial DNA depletion.</title>
        <authorList>
            <person name="Taanman J.-W."/>
            <person name="Rahman S."/>
            <person name="Pagnamenta A.T."/>
            <person name="Morris A.A.M."/>
            <person name="Bitner-Glindzicz M."/>
            <person name="Wolf N.I."/>
            <person name="Leonard J.V."/>
            <person name="Clayton P.T."/>
            <person name="Schapira A.H.V."/>
        </authorList>
    </citation>
    <scope>VARIANTS LS HIS-232 AND SER-848</scope>
    <scope>VARIANTS MTDPS4A ILE-251; THR-467; LEU-587; SER-748; CYS-831; SER-848; PRO-914; TYR-1110; ARG-1134 AND LYS-1136</scope>
    <scope>VARIANTS GLY-1143 AND HIS-1236</scope>
</reference>
<reference key="53">
    <citation type="journal article" date="2009" name="Neurology">
        <title>Fatal congenital myopathy and gastrointestinal pseudo-obstruction due to POLG1 mutations.</title>
        <authorList>
            <person name="Giordano C."/>
            <person name="Powell H."/>
            <person name="Leopizzi M."/>
            <person name="de Curtis M."/>
            <person name="Travaglini C."/>
            <person name="Sebastiani M."/>
            <person name="Gallo P."/>
            <person name="Taylor R.W."/>
            <person name="d'Amati G."/>
        </authorList>
    </citation>
    <scope>VARIANTS MTDPS4B TRP-227 AND SER-848</scope>
</reference>
<reference key="54">
    <citation type="journal article" date="2010" name="Brain">
        <title>Localized cerebral energy failure in DNA polymerase gamma-associated encephalopathy syndromes.</title>
        <authorList>
            <person name="Tzoulis C."/>
            <person name="Neckelmann G."/>
            <person name="Moerk S.J."/>
            <person name="Engelsen B.E."/>
            <person name="Viscomi C."/>
            <person name="Moen G."/>
            <person name="Ersland L."/>
            <person name="Zeviani M."/>
            <person name="Bindoff L.A."/>
        </authorList>
    </citation>
    <scope>VARIANTS SCAE THR-467 AND SER-748</scope>
    <scope>VARIANTS MTDPS4A ARG-303; THR-467 AND SER-848</scope>
</reference>
<reference key="55">
    <citation type="journal article" date="2011" name="J. Neurol.">
        <title>Genetic analysis of two Japanese families with progressive external ophthalmoplegia and parkinsonism.</title>
        <authorList>
            <person name="Sato K."/>
            <person name="Yabe I."/>
            <person name="Yaguchi H."/>
            <person name="Nakano F."/>
            <person name="Kunieda Y."/>
            <person name="Saitoh S."/>
            <person name="Sasaki H."/>
        </authorList>
    </citation>
    <scope>VARIANTS PEOB1 LEU-277 AND CYS-943</scope>
</reference>
<reference key="56">
    <citation type="journal article" date="2011" name="Pediatr. Neurol.">
        <title>Alpers syndrome with mutations in POLG: clinical and investigative features.</title>
        <authorList>
            <person name="Hunter M.F."/>
            <person name="Peters H."/>
            <person name="Salemi R."/>
            <person name="Thorburn D."/>
            <person name="Mackay M.T."/>
        </authorList>
    </citation>
    <scope>VARIANTS MTDPS4A ARG-305; THR-467; SER-748; SER-848; CYS-852 AND ARG-966</scope>
</reference>
<reference key="57">
    <citation type="journal article" date="2014" name="Indian Pediatr.">
        <title>Mitochondrial DNA depletion syndrome causing liver failure.</title>
        <authorList>
            <person name="Bijarnia-Mahay S."/>
            <person name="Mohan N."/>
            <person name="Goyal D."/>
            <person name="Verma I.C."/>
        </authorList>
    </citation>
    <scope>VARIANT MTDPS4A CYS-1096</scope>
</reference>
<reference key="58">
    <citation type="journal article" date="2016" name="Am. J. Hum. Genet.">
        <title>PRICKLE2 mutations might not be involved in epilepsy.</title>
        <authorList>
            <person name="Sandford E."/>
            <person name="Bird T.D."/>
            <person name="Li J.Z."/>
            <person name="Burmeister M."/>
        </authorList>
    </citation>
    <scope>INVOLVEMENT IN SCAE</scope>
    <scope>VARIANTS SCAE THR-467; HIS-497 AND SER-748</scope>
</reference>
<reference key="59">
    <citation type="journal article" date="2019" name="Eur. J. Hum. Genet.">
        <title>The role of recessive inheritance in early-onset epileptic encephalopathies: a combined whole-exome sequencing and copy number study.</title>
        <authorList>
            <person name="Papuc S.M."/>
            <person name="Abela L."/>
            <person name="Steindl K."/>
            <person name="Begemann A."/>
            <person name="Simmons T.L."/>
            <person name="Schmitt B."/>
            <person name="Zweier M."/>
            <person name="Oneda B."/>
            <person name="Socher E."/>
            <person name="Crowther L.M."/>
            <person name="Wohlrab G."/>
            <person name="Gogoll L."/>
            <person name="Poms M."/>
            <person name="Seiler M."/>
            <person name="Papik M."/>
            <person name="Baldinger R."/>
            <person name="Baumer A."/>
            <person name="Asadollahi R."/>
            <person name="Kroell-Seger J."/>
            <person name="Schmid R."/>
            <person name="Iff T."/>
            <person name="Schmitt-Mechelke T."/>
            <person name="Otten K."/>
            <person name="Hackenberg A."/>
            <person name="Addor M.C."/>
            <person name="Klein A."/>
            <person name="Azzarello-Burri S."/>
            <person name="Sticht H."/>
            <person name="Joset P."/>
            <person name="Plecko B."/>
            <person name="Rauch A."/>
        </authorList>
    </citation>
    <scope>VARIANTS GLN-275 AND SER-848</scope>
</reference>
<keyword id="KW-0002">3D-structure</keyword>
<keyword id="KW-0225">Disease variant</keyword>
<keyword id="KW-0235">DNA replication</keyword>
<keyword id="KW-0238">DNA-binding</keyword>
<keyword id="KW-0239">DNA-directed DNA polymerase</keyword>
<keyword id="KW-0887">Epilepsy</keyword>
<keyword id="KW-0378">Hydrolase</keyword>
<keyword id="KW-0431">Leigh syndrome</keyword>
<keyword id="KW-0456">Lyase</keyword>
<keyword id="KW-0460">Magnesium</keyword>
<keyword id="KW-0496">Mitochondrion</keyword>
<keyword id="KW-1135">Mitochondrion nucleoid</keyword>
<keyword id="KW-0523">Neurodegeneration</keyword>
<keyword id="KW-0622">Neuropathy</keyword>
<keyword id="KW-0548">Nucleotidyltransferase</keyword>
<keyword id="KW-1274">Primary mitochondrial disease</keyword>
<keyword id="KW-0935">Progressive external ophthalmoplegia</keyword>
<keyword id="KW-1267">Proteomics identification</keyword>
<keyword id="KW-1185">Reference proteome</keyword>
<keyword id="KW-0808">Transferase</keyword>